<name>FAS_HUMAN</name>
<organism>
    <name type="scientific">Homo sapiens</name>
    <name type="common">Human</name>
    <dbReference type="NCBI Taxonomy" id="9606"/>
    <lineage>
        <taxon>Eukaryota</taxon>
        <taxon>Metazoa</taxon>
        <taxon>Chordata</taxon>
        <taxon>Craniata</taxon>
        <taxon>Vertebrata</taxon>
        <taxon>Euteleostomi</taxon>
        <taxon>Mammalia</taxon>
        <taxon>Eutheria</taxon>
        <taxon>Euarchontoglires</taxon>
        <taxon>Primates</taxon>
        <taxon>Haplorrhini</taxon>
        <taxon>Catarrhini</taxon>
        <taxon>Hominidae</taxon>
        <taxon>Homo</taxon>
    </lineage>
</organism>
<keyword id="KW-0002">3D-structure</keyword>
<keyword id="KW-0007">Acetylation</keyword>
<keyword id="KW-0963">Cytoplasm</keyword>
<keyword id="KW-0903">Direct protein sequencing</keyword>
<keyword id="KW-0275">Fatty acid biosynthesis</keyword>
<keyword id="KW-0276">Fatty acid metabolism</keyword>
<keyword id="KW-0378">Hydrolase</keyword>
<keyword id="KW-1017">Isopeptide bond</keyword>
<keyword id="KW-0444">Lipid biosynthesis</keyword>
<keyword id="KW-0443">Lipid metabolism</keyword>
<keyword id="KW-0456">Lyase</keyword>
<keyword id="KW-0511">Multifunctional enzyme</keyword>
<keyword id="KW-0520">NAD</keyword>
<keyword id="KW-0521">NADP</keyword>
<keyword id="KW-0560">Oxidoreductase</keyword>
<keyword id="KW-0596">Phosphopantetheine</keyword>
<keyword id="KW-0597">Phosphoprotein</keyword>
<keyword id="KW-1267">Proteomics identification</keyword>
<keyword id="KW-0663">Pyridoxal phosphate</keyword>
<keyword id="KW-1185">Reference proteome</keyword>
<keyword id="KW-0702">S-nitrosylation</keyword>
<keyword id="KW-0808">Transferase</keyword>
<keyword id="KW-0832">Ubl conjugation</keyword>
<evidence type="ECO:0000250" key="1"/>
<evidence type="ECO:0000250" key="2">
    <source>
        <dbReference type="UniProtKB" id="P12785"/>
    </source>
</evidence>
<evidence type="ECO:0000250" key="3">
    <source>
        <dbReference type="UniProtKB" id="P19096"/>
    </source>
</evidence>
<evidence type="ECO:0000255" key="4">
    <source>
        <dbReference type="PROSITE-ProRule" id="PRU00258"/>
    </source>
</evidence>
<evidence type="ECO:0000255" key="5">
    <source>
        <dbReference type="PROSITE-ProRule" id="PRU01348"/>
    </source>
</evidence>
<evidence type="ECO:0000255" key="6">
    <source>
        <dbReference type="PROSITE-ProRule" id="PRU01363"/>
    </source>
</evidence>
<evidence type="ECO:0000255" key="7">
    <source>
        <dbReference type="PROSITE-ProRule" id="PRU10022"/>
    </source>
</evidence>
<evidence type="ECO:0000269" key="8">
    <source>
    </source>
</evidence>
<evidence type="ECO:0000269" key="9">
    <source>
    </source>
</evidence>
<evidence type="ECO:0000269" key="10">
    <source>
    </source>
</evidence>
<evidence type="ECO:0000269" key="11">
    <source>
    </source>
</evidence>
<evidence type="ECO:0000269" key="12">
    <source>
    </source>
</evidence>
<evidence type="ECO:0000269" key="13">
    <source>
    </source>
</evidence>
<evidence type="ECO:0000269" key="14">
    <source>
    </source>
</evidence>
<evidence type="ECO:0000269" key="15">
    <source>
    </source>
</evidence>
<evidence type="ECO:0000269" key="16">
    <source>
    </source>
</evidence>
<evidence type="ECO:0000269" key="17">
    <source>
    </source>
</evidence>
<evidence type="ECO:0000269" key="18">
    <source>
    </source>
</evidence>
<evidence type="ECO:0000269" key="19">
    <source>
    </source>
</evidence>
<evidence type="ECO:0000269" key="20">
    <source>
    </source>
</evidence>
<evidence type="ECO:0000269" key="21">
    <source ref="34"/>
</evidence>
<evidence type="ECO:0000269" key="22">
    <source ref="7"/>
</evidence>
<evidence type="ECO:0000305" key="23"/>
<evidence type="ECO:0007744" key="24">
    <source>
        <dbReference type="PDB" id="2JFD"/>
    </source>
</evidence>
<evidence type="ECO:0007744" key="25">
    <source>
    </source>
</evidence>
<evidence type="ECO:0007744" key="26">
    <source>
    </source>
</evidence>
<evidence type="ECO:0007744" key="27">
    <source>
    </source>
</evidence>
<evidence type="ECO:0007744" key="28">
    <source>
    </source>
</evidence>
<evidence type="ECO:0007744" key="29">
    <source>
    </source>
</evidence>
<evidence type="ECO:0007744" key="30">
    <source>
    </source>
</evidence>
<evidence type="ECO:0007744" key="31">
    <source>
    </source>
</evidence>
<evidence type="ECO:0007744" key="32">
    <source>
    </source>
</evidence>
<evidence type="ECO:0007744" key="33">
    <source>
    </source>
</evidence>
<evidence type="ECO:0007829" key="34">
    <source>
        <dbReference type="PDB" id="2CG5"/>
    </source>
</evidence>
<evidence type="ECO:0007829" key="35">
    <source>
        <dbReference type="PDB" id="2JFD"/>
    </source>
</evidence>
<evidence type="ECO:0007829" key="36">
    <source>
        <dbReference type="PDB" id="3HHD"/>
    </source>
</evidence>
<evidence type="ECO:0007829" key="37">
    <source>
        <dbReference type="PDB" id="3TJM"/>
    </source>
</evidence>
<evidence type="ECO:0007829" key="38">
    <source>
        <dbReference type="PDB" id="4W82"/>
    </source>
</evidence>
<evidence type="ECO:0007829" key="39">
    <source>
        <dbReference type="PDB" id="4W9N"/>
    </source>
</evidence>
<evidence type="ECO:0007829" key="40">
    <source>
        <dbReference type="PDB" id="4Z49"/>
    </source>
</evidence>
<evidence type="ECO:0007829" key="41">
    <source>
        <dbReference type="PDB" id="5C37"/>
    </source>
</evidence>
<evidence type="ECO:0007829" key="42">
    <source>
        <dbReference type="PDB" id="6NNA"/>
    </source>
</evidence>
<evidence type="ECO:0007829" key="43">
    <source>
        <dbReference type="PDB" id="7MHD"/>
    </source>
</evidence>
<evidence type="ECO:0007829" key="44">
    <source>
        <dbReference type="PDB" id="8EYI"/>
    </source>
</evidence>
<evidence type="ECO:0007829" key="45">
    <source>
        <dbReference type="PDB" id="8G7X"/>
    </source>
</evidence>
<evidence type="ECO:0007829" key="46">
    <source>
        <dbReference type="PDB" id="8GKC"/>
    </source>
</evidence>
<gene>
    <name type="primary">FASN</name>
    <name type="synonym">FAS</name>
</gene>
<protein>
    <recommendedName>
        <fullName>Fatty acid synthase</fullName>
        <ecNumber evidence="9 14 17 19 20">2.3.1.85</ecNumber>
    </recommendedName>
    <alternativeName>
        <fullName>Type I fatty acid synthase</fullName>
    </alternativeName>
    <domain>
        <recommendedName>
            <fullName>[Acyl-carrier-protein] S-acetyltransferase</fullName>
            <ecNumber evidence="17 19 20">2.3.1.38</ecNumber>
        </recommendedName>
    </domain>
    <domain>
        <recommendedName>
            <fullName>[Acyl-carrier-protein] S-malonyltransferase</fullName>
            <ecNumber evidence="17 19 20">2.3.1.39</ecNumber>
        </recommendedName>
    </domain>
    <domain>
        <recommendedName>
            <fullName>3-oxoacyl-[acyl-carrier-protein] synthase</fullName>
            <ecNumber evidence="17 19 20">2.3.1.41</ecNumber>
        </recommendedName>
    </domain>
    <domain>
        <recommendedName>
            <fullName>3-oxoacyl-[acyl-carrier-protein] reductase</fullName>
            <ecNumber evidence="17 19 20">1.1.1.100</ecNumber>
        </recommendedName>
    </domain>
    <domain>
        <recommendedName>
            <fullName>3-hydroxyacyl-[acyl-carrier-protein] dehydratase</fullName>
            <ecNumber evidence="17 19 20">4.2.1.59</ecNumber>
        </recommendedName>
    </domain>
    <domain>
        <recommendedName>
            <fullName>Enoyl-[acyl-carrier-protein] reductase</fullName>
            <ecNumber evidence="17 19 20">1.3.1.39</ecNumber>
        </recommendedName>
    </domain>
    <domain>
        <recommendedName>
            <fullName>Acyl-[acyl-carrier-protein] hydrolase</fullName>
            <ecNumber evidence="8 17 19 20">3.1.2.14</ecNumber>
        </recommendedName>
    </domain>
</protein>
<sequence>MEEVVIAGMSGKLPESENLQEFWDNLIGGVDMVTDDDRRWKAGLYGLPRRSGKLKDLSRFDASFFGVHPKQAHTMDPQLRLLLEVTYEAIVDGGINPDSLRGTHTGVWVGVSGSETSEALSRDPETLVGYSMVGCQRAMMANRLSFFFDFRGPSIALDTACSSSLMALQNAYQAIHSGQCPAAIVGGINVLLKPNTSVQFLRLGMLSPEGTCKAFDTAGNGYCRSEGVVAVLLTKKSLARRVYATILNAGTNTDGFKEQGVTFPSGDIQEQLIRSLYQSAGVAPESFEYIEAHGTGTKVGDPQELNGITRALCATRQEPLLIGSTKSNMGHPEPASGLAALAKVLLSLEHGLWAPNLHFHSPNPEIPALLDGRLQVVDQPLPVRGGNVGINSFGFGGSNVHIILRPNTQPPPAPAPHATLPRLLRASGRTPEAVQKLLEQGLRHSQDLAFLSMLNDIAAVPATAMPFRGYAVLGGERGGPEVQQVPAGERPLWFICSGMGTQWRGMGLSLMRLDRFRDSILRSDEAVKPFGLKVSQLLLSTDESTFDDIVHSFVSLTAIQIGLIDLLSCMGLRPDGIVGHSLGEVACGYADGCLSQEEAVLAAYWRGQCIKEAHLPPGAMAAVGLSWEECKQRCPPGVVPACHNSKDTVTISGPQAPVFEFVEQLRKEGVFAKEVRTGGMAFHSYFMEAIAPPLLQELKKVIREPKPRSARWLSTSIPEAQWHSSLARTSSAEYNVNNLVSPVLFQEALWHVPEHAVVLEIAPHALLQAVLKRGLKPSCTIIPLMKKDHRDNLEFFLAGIGRLHLSGIDANPNALFPPVEFPAPRGTPLISPLIKWDHSLAWDVPAAEDFPNGSGSPSAAIYNIDTSSESPDHYLVDHTLDGRVLFPATGYLSIVWKTLARALGLGVEQLPVVFEDVVLHQATILPKTGTVSLEVRLLEASRAFEVSENGNLVVSGKVYQWDDPDPRLFDHPESPTPNPTEPLFLAQAEVYKELRLRGYDYGPHFQGILEASLEGDSGRLLWKDNWVSFMDTMLQMSILGSAKHGLYLPTRVTAIHIDPATHRQKLYTLQDKAQVADVVVSRWLRVTVAGGVHISGLHTESAPRRQQEQQVPILEKFCFTPHTEEGCLSERAALQEELQLCKGLVQALQTKVTQQGLKMVVPGLDGAQIPRDPSQQELPRLLSAACRLQLNGNLQLELAQVLAQERPKLPEDPLLSGLLDSPALKACLDTAVENMPSLKMKVVEVLAGHGHLYSRIPGLLSPHPLLQLSYTATDRHPQALEAAQAELQQHDVAQGQWDPADPAPSALGSADLLVCNCAVAALGDPASALSNMVAALREGGFLLLHTLLRGHPLGDIVAFLTSTEPQYGQGILSQDAWESLFSRVSLRLVGLKKSFYGSTLFLCRRPTPQDSPIFLPVDDTSFRWVESLKGILADEDSSRPVWLKAINCATSGVVGLVNCLRREPGGNRLRCVLLSNLSSTSHVPEVDPGSAELQKVLQGDLVMNVYRDGAWGAFRHFLLEEDKPEEPTAHAFVSTLTRGDLSSIRWVCSSLRHAQPTCPGAQLCTVYYASLNFRDIMLATGKLSPDAIPGKWTSQDSLLGMEFSGRDASGKRVMGLVPAKGLATSVLLSPDFLWDVPSNWTLEEAASVPVVYSTAYYALVVRGRVRPGETLLIHSGSGGVGQAAIAIALSLGCRVFTTVGSAEKRAYLQARFPQLDSTSFANSRDTSFEQHVLWHTGGKGVDLVLNSLAEEKLQASVRCLATHGRFLEIGKFDLSQNHPLGMAIFLKNVTFHGVLLDAFFNESSADWREVWALVQAGIRDGVVRPLKCTVFHGAQVEDAFRYMAQGKHIGKVVVQVLAEEPEAVLKGAKPKLMSAISKTFCPAHKSYIIAGGLGGFGLELAQWLIQRGVQKLVLTSRSGIRTGYQAKQVRRWRRQGVQVQVSTSNISSLEGARGLIAEAAQLGPVGGVFNLAVVLRDGLLENQTPEFFQDVCKPKYSGTLNLDRVTREACPELDYFVVFSSVSCGRGNAGQSNYGFANSAMERICEKRRHEGLPGLAVQWGAIGDVGILVETMSTNDTIVSGTLPQRMASCLEVLDLFLNQPHMVLSSFVLAEKAAAYRDRDSQRDLVEAVAHILGIRDLAAVNLDSSLADLGLDSLMSVEVRQTLERELNLVLSVREVRQLTLRKLQELSSKADEASELACPTPKEDGLAQQQTQLNLRSLLVNPEGPTLMRLNSVQSSERPLFLVHPIEGSTTVFHSLASRLSIPTYGLQCTRAAPLDSIHSLAAYYIDCIRQVQPEGPYRVAGYSYGACVAFEMCSQLQAQQSPAPTHNSLFLFDGSPTYVLAYTQSYRAKLTPGCEAEAETEAICFFVQQFTDMEHNRVLEALLPLKGLEERVAAAVDLIIKSHQGLDRQELSFAARSFYYKLRAAEQYTPKAKYHGNVMLLRAKTGGAYGEDLGADYNLSQVCDGKVSVHVIEGDHRTLLEGSGLESIISIIHSSLAEPRVSVREG</sequence>
<feature type="chain" id="PRO_0000180276" description="Fatty acid synthase">
    <location>
        <begin position="1"/>
        <end position="2511"/>
    </location>
</feature>
<feature type="domain" description="Ketosynthase family 3 (KS3)" evidence="5">
    <location>
        <begin position="1"/>
        <end position="406"/>
    </location>
</feature>
<feature type="domain" description="PKS/mFAS DH" evidence="6">
    <location>
        <begin position="838"/>
        <end position="1108"/>
    </location>
</feature>
<feature type="domain" description="Carrier" evidence="4">
    <location>
        <begin position="2121"/>
        <end position="2198"/>
    </location>
</feature>
<feature type="region of interest" description="Acyl and malonyl transferases" evidence="1">
    <location>
        <begin position="429"/>
        <end position="817"/>
    </location>
</feature>
<feature type="region of interest" description="N-terminal hotdog fold" evidence="6">
    <location>
        <begin position="838"/>
        <end position="966"/>
    </location>
</feature>
<feature type="region of interest" description="C-terminal hotdog fold" evidence="6">
    <location>
        <begin position="981"/>
        <end position="1108"/>
    </location>
</feature>
<feature type="region of interest" description="Enoyl reductase" evidence="1">
    <location>
        <begin position="1635"/>
        <end position="1863"/>
    </location>
</feature>
<feature type="region of interest" description="Beta-ketoacyl reductase" evidence="1">
    <location>
        <begin position="1864"/>
        <end position="2118"/>
    </location>
</feature>
<feature type="region of interest" description="Thioesterase" evidence="1">
    <location>
        <begin position="2207"/>
        <end position="2511"/>
    </location>
</feature>
<feature type="active site" description="For beta-ketoacyl synthase activity" evidence="5">
    <location>
        <position position="161"/>
    </location>
</feature>
<feature type="active site" description="For beta-ketoacyl synthase activity" evidence="5">
    <location>
        <position position="293"/>
    </location>
</feature>
<feature type="active site" description="For beta-ketoacyl synthase activity" evidence="5">
    <location>
        <position position="331"/>
    </location>
</feature>
<feature type="active site" description="For malonyltransferase activity" evidence="7">
    <location>
        <position position="581"/>
    </location>
</feature>
<feature type="active site" description="Proton acceptor; for dehydratase activity" evidence="6">
    <location>
        <position position="878"/>
    </location>
</feature>
<feature type="active site" description="Proton donor; for dehydratase activity" evidence="6">
    <location>
        <position position="1031"/>
    </location>
</feature>
<feature type="active site" description="For thioesterase activity" evidence="7 12">
    <location>
        <position position="2308"/>
    </location>
</feature>
<feature type="active site" description="For thioesterase activity" evidence="7">
    <location>
        <position position="2481"/>
    </location>
</feature>
<feature type="binding site" evidence="3">
    <location>
        <begin position="647"/>
        <end position="648"/>
    </location>
    <ligand>
        <name>an acyl-CoA</name>
        <dbReference type="ChEBI" id="CHEBI:58342"/>
    </ligand>
</feature>
<feature type="binding site" evidence="3">
    <location>
        <position position="671"/>
    </location>
    <ligand>
        <name>an acyl-CoA</name>
        <dbReference type="ChEBI" id="CHEBI:58342"/>
    </ligand>
</feature>
<feature type="binding site" evidence="3">
    <location>
        <position position="773"/>
    </location>
    <ligand>
        <name>an acyl-CoA</name>
        <dbReference type="ChEBI" id="CHEBI:58342"/>
    </ligand>
</feature>
<feature type="binding site" evidence="1">
    <location>
        <begin position="1671"/>
        <end position="1688"/>
    </location>
    <ligand>
        <name>NADP(+)</name>
        <dbReference type="ChEBI" id="CHEBI:58349"/>
        <label>1</label>
        <note>for enoyl reductase activity</note>
    </ligand>
</feature>
<feature type="binding site" evidence="1">
    <location>
        <begin position="1886"/>
        <end position="1901"/>
    </location>
    <ligand>
        <name>NADP(+)</name>
        <dbReference type="ChEBI" id="CHEBI:58349"/>
        <label>2</label>
        <note>for ketoreductase activity</note>
    </ligand>
</feature>
<feature type="modified residue" description="N-acetylmethionine" evidence="22 28 30">
    <location>
        <position position="1"/>
    </location>
</feature>
<feature type="modified residue" description="Phosphoserine" evidence="31">
    <location>
        <position position="63"/>
    </location>
</feature>
<feature type="modified residue" description="N6-acetyllysine" evidence="29">
    <location>
        <position position="70"/>
    </location>
</feature>
<feature type="modified residue" description="Phosphoserine" evidence="26 31">
    <location>
        <position position="207"/>
    </location>
</feature>
<feature type="modified residue" description="N6-acetyllysine" evidence="29">
    <location>
        <position position="298"/>
    </location>
</feature>
<feature type="modified residue" description="N6-acetyllysine" evidence="29">
    <location>
        <position position="436"/>
    </location>
</feature>
<feature type="modified residue" description="N6-acetyllysine" evidence="29">
    <location>
        <position position="528"/>
    </location>
</feature>
<feature type="modified residue" description="N6-acetyllysine" evidence="29">
    <location>
        <position position="673"/>
    </location>
</feature>
<feature type="modified residue" description="Phosphoserine" evidence="3">
    <location>
        <position position="725"/>
    </location>
</feature>
<feature type="modified residue" description="N6-acetyllysine" evidence="3">
    <location>
        <position position="992"/>
    </location>
</feature>
<feature type="modified residue" description="Phosphoserine" evidence="32">
    <location>
        <position position="1174"/>
    </location>
</feature>
<feature type="modified residue" description="Phosphoserine" evidence="31 32">
    <location>
        <position position="1411"/>
    </location>
</feature>
<feature type="modified residue" description="S-nitrosocysteine" evidence="14">
    <location>
        <position position="1471"/>
    </location>
</feature>
<feature type="modified residue" description="Phosphoserine" evidence="31">
    <location>
        <position position="1584"/>
    </location>
</feature>
<feature type="modified residue" description="Phosphoserine" evidence="3">
    <location>
        <position position="1594"/>
    </location>
</feature>
<feature type="modified residue" description="N6-(pyridoxal phosphate)lysine; alternate" evidence="1">
    <location>
        <position position="1704"/>
    </location>
</feature>
<feature type="modified residue" description="N6-acetyllysine; alternate" evidence="29">
    <location>
        <position position="1704"/>
    </location>
</feature>
<feature type="modified residue" description="N6-acetyllysine" evidence="29">
    <location>
        <position position="1771"/>
    </location>
</feature>
<feature type="modified residue" description="N6-acetyllysine" evidence="29">
    <location>
        <position position="1847"/>
    </location>
</feature>
<feature type="modified residue" description="N6-acetyllysine" evidence="29">
    <location>
        <position position="1995"/>
    </location>
</feature>
<feature type="modified residue" description="S-nitrosocysteine" evidence="14">
    <location>
        <position position="2091"/>
    </location>
</feature>
<feature type="modified residue" description="O-(pantetheine 4'-phosphoryl)serine; alternate" evidence="4 17">
    <location>
        <position position="2156"/>
    </location>
</feature>
<feature type="modified residue" description="Phosphoserine; alternate" evidence="2">
    <location>
        <position position="2156"/>
    </location>
</feature>
<feature type="modified residue" description="Phosphoserine" evidence="25 26 31 32">
    <location>
        <position position="2198"/>
    </location>
</feature>
<feature type="modified residue" description="Phosphothreonine" evidence="25 26 27 31 32">
    <location>
        <position position="2204"/>
    </location>
</feature>
<feature type="modified residue" description="Phosphothreonine" evidence="31 32">
    <location>
        <position position="2215"/>
    </location>
</feature>
<feature type="modified residue" description="Phosphoserine" evidence="26">
    <location>
        <position position="2236"/>
    </location>
</feature>
<feature type="modified residue" description="N6-acetyllysine" evidence="3">
    <location>
        <position position="2391"/>
    </location>
</feature>
<feature type="cross-link" description="Glycyl lysine isopeptide (Lys-Gly) (interchain with G-Cter in SUMO2)" evidence="33">
    <location>
        <position position="2449"/>
    </location>
</feature>
<feature type="sequence variant" id="VAR_079534" description="In dbSNP:rs113931914." evidence="15">
    <original>R</original>
    <variation>H</variation>
    <location>
        <position position="477"/>
    </location>
</feature>
<feature type="sequence variant" id="VAR_055479" description="In dbSNP:rs2228305.">
    <original>V</original>
    <variation>I</variation>
    <location>
        <position position="1483"/>
    </location>
</feature>
<feature type="sequence variant" id="VAR_055480" description="In dbSNP:rs561903908.">
    <original>R</original>
    <variation>H</variation>
    <location>
        <position position="1694"/>
    </location>
</feature>
<feature type="sequence variant" id="VAR_055481" description="In dbSNP:rs2228307.">
    <original>I</original>
    <variation>V</variation>
    <location>
        <position position="1888"/>
    </location>
</feature>
<feature type="sequence conflict" description="In Ref. 2; AAA73576." evidence="23" ref="2">
    <original>AVPA</original>
    <variation>LSPT</variation>
    <location>
        <begin position="459"/>
        <end position="462"/>
    </location>
</feature>
<feature type="sequence conflict" description="In Ref. 2; AAA73576." evidence="23" ref="2">
    <original>KP</original>
    <variation>NR</variation>
    <location>
        <begin position="528"/>
        <end position="529"/>
    </location>
</feature>
<feature type="sequence conflict" description="In Ref. 2; AAA73576." evidence="23" ref="2">
    <original>G</original>
    <variation>A</variation>
    <location>
        <position position="637"/>
    </location>
</feature>
<feature type="sequence conflict" description="In Ref. 2; AAA73576." evidence="23" ref="2">
    <original>G</original>
    <variation>R</variation>
    <location>
        <position position="801"/>
    </location>
</feature>
<feature type="sequence conflict" description="In Ref. 2; AAA73576." evidence="23" ref="2">
    <original>A</original>
    <variation>P</variation>
    <location>
        <position position="902"/>
    </location>
</feature>
<feature type="sequence conflict" description="In Ref. 3; AAS09886." evidence="23" ref="3">
    <original>V</original>
    <variation>M</variation>
    <location>
        <position position="958"/>
    </location>
</feature>
<feature type="sequence conflict" description="In Ref. 2; AAA73576 and 3; AAS09886." evidence="23" ref="2 3">
    <original>P</original>
    <variation>S</variation>
    <location>
        <position position="1121"/>
    </location>
</feature>
<feature type="sequence conflict" description="In Ref. 6; AAH63242." evidence="23" ref="6">
    <original>K</original>
    <variation>T</variation>
    <location>
        <position position="1151"/>
    </location>
</feature>
<feature type="sequence conflict" description="In Ref. 2; AAA73576." evidence="23" ref="2">
    <original>LGDI</original>
    <variation>SGH</variation>
    <location>
        <begin position="1353"/>
        <end position="1356"/>
    </location>
</feature>
<feature type="sequence conflict" description="In Ref. 2; AAA73576." evidence="23" ref="2">
    <original>L</original>
    <variation>V</variation>
    <location>
        <position position="1386"/>
    </location>
</feature>
<feature type="sequence conflict" description="In Ref. 2; AAA73576." evidence="23" ref="2">
    <original>NR</original>
    <variation>T</variation>
    <location>
        <begin position="1467"/>
        <end position="1468"/>
    </location>
</feature>
<feature type="sequence conflict" description="In Ref. 3; AAS09886." evidence="23" ref="3">
    <original>K</original>
    <variation>E</variation>
    <location>
        <position position="1827"/>
    </location>
</feature>
<feature type="sequence conflict" description="In Ref. 2; AAA73576." evidence="23" ref="2">
    <original>R</original>
    <variation>A</variation>
    <location>
        <position position="1934"/>
    </location>
</feature>
<feature type="sequence conflict" description="In Ref. 9; AAB35516." evidence="23" ref="9">
    <original>D</original>
    <variation>H</variation>
    <location>
        <position position="2065"/>
    </location>
</feature>
<feature type="sequence conflict" description="In Ref. 2; AAA73576." evidence="23" ref="2">
    <original>R</original>
    <variation>A</variation>
    <location>
        <position position="2087"/>
    </location>
</feature>
<feature type="sequence conflict" description="In Ref. 9; AAB35516." evidence="23" ref="9">
    <original>A</original>
    <variation>P</variation>
    <location>
        <position position="2363"/>
    </location>
</feature>
<feature type="sequence conflict" description="In Ref. 2; AAA73576." evidence="23" ref="2">
    <original>R</original>
    <variation>G</variation>
    <location>
        <position position="2428"/>
    </location>
</feature>
<feature type="sequence conflict" description="In Ref. 9; AAB35516." evidence="23" ref="9">
    <original>A</original>
    <variation>T</variation>
    <location>
        <position position="2453"/>
    </location>
</feature>
<feature type="sequence conflict" description="In Ref. 9; AAB35516." evidence="23" ref="9">
    <original>E</original>
    <variation>Q</variation>
    <location>
        <position position="2456"/>
    </location>
</feature>
<feature type="strand" evidence="36">
    <location>
        <begin position="4"/>
        <end position="13"/>
    </location>
</feature>
<feature type="strand" evidence="36">
    <location>
        <begin position="16"/>
        <end position="18"/>
    </location>
</feature>
<feature type="helix" evidence="36">
    <location>
        <begin position="19"/>
        <end position="27"/>
    </location>
</feature>
<feature type="strand" evidence="36">
    <location>
        <begin position="36"/>
        <end position="40"/>
    </location>
</feature>
<feature type="helix" evidence="36">
    <location>
        <begin position="44"/>
        <end position="46"/>
    </location>
</feature>
<feature type="turn" evidence="36">
    <location>
        <begin position="62"/>
        <end position="66"/>
    </location>
</feature>
<feature type="helix" evidence="36">
    <location>
        <begin position="69"/>
        <end position="73"/>
    </location>
</feature>
<feature type="helix" evidence="36">
    <location>
        <begin position="77"/>
        <end position="92"/>
    </location>
</feature>
<feature type="helix" evidence="36">
    <location>
        <begin position="97"/>
        <end position="100"/>
    </location>
</feature>
<feature type="strand" evidence="36">
    <location>
        <begin position="106"/>
        <end position="110"/>
    </location>
</feature>
<feature type="helix" evidence="36">
    <location>
        <begin position="115"/>
        <end position="120"/>
    </location>
</feature>
<feature type="turn" evidence="36">
    <location>
        <begin position="124"/>
        <end position="126"/>
    </location>
</feature>
<feature type="helix" evidence="36">
    <location>
        <begin position="130"/>
        <end position="135"/>
    </location>
</feature>
<feature type="helix" evidence="36">
    <location>
        <begin position="139"/>
        <end position="148"/>
    </location>
</feature>
<feature type="strand" evidence="36">
    <location>
        <begin position="154"/>
        <end position="158"/>
    </location>
</feature>
<feature type="helix" evidence="36">
    <location>
        <begin position="160"/>
        <end position="162"/>
    </location>
</feature>
<feature type="helix" evidence="36">
    <location>
        <begin position="163"/>
        <end position="176"/>
    </location>
</feature>
<feature type="strand" evidence="36">
    <location>
        <begin position="181"/>
        <end position="189"/>
    </location>
</feature>
<feature type="helix" evidence="36">
    <location>
        <begin position="194"/>
        <end position="202"/>
    </location>
</feature>
<feature type="strand" evidence="36">
    <location>
        <begin position="227"/>
        <end position="235"/>
    </location>
</feature>
<feature type="helix" evidence="36">
    <location>
        <begin position="236"/>
        <end position="238"/>
    </location>
</feature>
<feature type="strand" evidence="36">
    <location>
        <begin position="243"/>
        <end position="253"/>
    </location>
</feature>
<feature type="helix" evidence="36">
    <location>
        <begin position="266"/>
        <end position="279"/>
    </location>
</feature>
<feature type="helix" evidence="36">
    <location>
        <begin position="284"/>
        <end position="286"/>
    </location>
</feature>
<feature type="strand" evidence="36">
    <location>
        <begin position="287"/>
        <end position="291"/>
    </location>
</feature>
<feature type="helix" evidence="36">
    <location>
        <begin position="300"/>
        <end position="312"/>
    </location>
</feature>
<feature type="strand" evidence="36">
    <location>
        <begin position="320"/>
        <end position="323"/>
    </location>
</feature>
<feature type="helix" evidence="36">
    <location>
        <begin position="326"/>
        <end position="329"/>
    </location>
</feature>
<feature type="helix" evidence="36">
    <location>
        <begin position="333"/>
        <end position="335"/>
    </location>
</feature>
<feature type="helix" evidence="36">
    <location>
        <begin position="336"/>
        <end position="350"/>
    </location>
</feature>
<feature type="helix" evidence="36">
    <location>
        <begin position="367"/>
        <end position="370"/>
    </location>
</feature>
<feature type="strand" evidence="36">
    <location>
        <begin position="373"/>
        <end position="376"/>
    </location>
</feature>
<feature type="strand" evidence="36">
    <location>
        <begin position="387"/>
        <end position="393"/>
    </location>
</feature>
<feature type="strand" evidence="36">
    <location>
        <begin position="397"/>
        <end position="406"/>
    </location>
</feature>
<feature type="helix" evidence="36">
    <location>
        <begin position="416"/>
        <end position="419"/>
    </location>
</feature>
<feature type="strand" evidence="36">
    <location>
        <begin position="422"/>
        <end position="430"/>
    </location>
</feature>
<feature type="helix" evidence="36">
    <location>
        <begin position="431"/>
        <end position="443"/>
    </location>
</feature>
<feature type="turn" evidence="36">
    <location>
        <begin position="444"/>
        <end position="446"/>
    </location>
</feature>
<feature type="helix" evidence="36">
    <location>
        <begin position="448"/>
        <end position="457"/>
    </location>
</feature>
<feature type="turn" evidence="36">
    <location>
        <begin position="462"/>
        <end position="464"/>
    </location>
</feature>
<feature type="strand" evidence="36">
    <location>
        <begin position="467"/>
        <end position="477"/>
    </location>
</feature>
<feature type="strand" evidence="36">
    <location>
        <begin position="481"/>
        <end position="484"/>
    </location>
</feature>
<feature type="strand" evidence="36">
    <location>
        <begin position="492"/>
        <end position="496"/>
    </location>
</feature>
<feature type="turn" evidence="36">
    <location>
        <begin position="504"/>
        <end position="509"/>
    </location>
</feature>
<feature type="helix" evidence="36">
    <location>
        <begin position="510"/>
        <end position="512"/>
    </location>
</feature>
<feature type="helix" evidence="36">
    <location>
        <begin position="514"/>
        <end position="527"/>
    </location>
</feature>
<feature type="helix" evidence="36">
    <location>
        <begin position="528"/>
        <end position="530"/>
    </location>
</feature>
<feature type="helix" evidence="36">
    <location>
        <begin position="534"/>
        <end position="539"/>
    </location>
</feature>
<feature type="helix" evidence="36">
    <location>
        <begin position="545"/>
        <end position="547"/>
    </location>
</feature>
<feature type="helix" evidence="36">
    <location>
        <begin position="549"/>
        <end position="569"/>
    </location>
</feature>
<feature type="strand" evidence="36">
    <location>
        <begin position="575"/>
        <end position="579"/>
    </location>
</feature>
<feature type="helix" evidence="36">
    <location>
        <begin position="583"/>
        <end position="590"/>
    </location>
</feature>
<feature type="helix" evidence="36">
    <location>
        <begin position="596"/>
        <end position="611"/>
    </location>
</feature>
<feature type="strand" evidence="36">
    <location>
        <begin position="618"/>
        <end position="625"/>
    </location>
</feature>
<feature type="helix" evidence="36">
    <location>
        <begin position="627"/>
        <end position="633"/>
    </location>
</feature>
<feature type="strand" evidence="36">
    <location>
        <begin position="639"/>
        <end position="645"/>
    </location>
</feature>
<feature type="strand" evidence="36">
    <location>
        <begin position="648"/>
        <end position="654"/>
    </location>
</feature>
<feature type="helix" evidence="36">
    <location>
        <begin position="655"/>
        <end position="667"/>
    </location>
</feature>
<feature type="strand" evidence="36">
    <location>
        <begin position="672"/>
        <end position="675"/>
    </location>
</feature>
<feature type="strand" evidence="35">
    <location>
        <begin position="677"/>
        <end position="679"/>
    </location>
</feature>
<feature type="helix" evidence="36">
    <location>
        <begin position="685"/>
        <end position="690"/>
    </location>
</feature>
<feature type="helix" evidence="36">
    <location>
        <begin position="691"/>
        <end position="701"/>
    </location>
</feature>
<feature type="strand" evidence="35">
    <location>
        <begin position="702"/>
        <end position="704"/>
    </location>
</feature>
<feature type="strand" evidence="36">
    <location>
        <begin position="715"/>
        <end position="717"/>
    </location>
</feature>
<feature type="helix" evidence="36">
    <location>
        <begin position="719"/>
        <end position="721"/>
    </location>
</feature>
<feature type="helix" evidence="36">
    <location>
        <begin position="725"/>
        <end position="728"/>
    </location>
</feature>
<feature type="helix" evidence="36">
    <location>
        <begin position="732"/>
        <end position="740"/>
    </location>
</feature>
<feature type="helix" evidence="36">
    <location>
        <begin position="745"/>
        <end position="749"/>
    </location>
</feature>
<feature type="strand" evidence="36">
    <location>
        <begin position="757"/>
        <end position="764"/>
    </location>
</feature>
<feature type="helix" evidence="36">
    <location>
        <begin position="768"/>
        <end position="774"/>
    </location>
</feature>
<feature type="strand" evidence="36">
    <location>
        <begin position="780"/>
        <end position="783"/>
    </location>
</feature>
<feature type="helix" evidence="36">
    <location>
        <begin position="792"/>
        <end position="805"/>
    </location>
</feature>
<feature type="helix" evidence="36">
    <location>
        <begin position="812"/>
        <end position="815"/>
    </location>
</feature>
<feature type="helix" evidence="36">
    <location>
        <begin position="831"/>
        <end position="833"/>
    </location>
</feature>
<feature type="helix" evidence="36">
    <location>
        <begin position="847"/>
        <end position="849"/>
    </location>
</feature>
<feature type="strand" evidence="45">
    <location>
        <begin position="858"/>
        <end position="865"/>
    </location>
</feature>
<feature type="strand" evidence="44">
    <location>
        <begin position="867"/>
        <end position="870"/>
    </location>
</feature>
<feature type="helix" evidence="45">
    <location>
        <begin position="873"/>
        <end position="877"/>
    </location>
</feature>
<feature type="strand" evidence="46">
    <location>
        <begin position="878"/>
        <end position="880"/>
    </location>
</feature>
<feature type="strand" evidence="45">
    <location>
        <begin position="883"/>
        <end position="885"/>
    </location>
</feature>
<feature type="helix" evidence="45">
    <location>
        <begin position="888"/>
        <end position="903"/>
    </location>
</feature>
<feature type="helix" evidence="45">
    <location>
        <begin position="907"/>
        <end position="909"/>
    </location>
</feature>
<feature type="strand" evidence="45">
    <location>
        <begin position="912"/>
        <end position="919"/>
    </location>
</feature>
<feature type="strand" evidence="45">
    <location>
        <begin position="927"/>
        <end position="938"/>
    </location>
</feature>
<feature type="turn" evidence="45">
    <location>
        <begin position="939"/>
        <end position="942"/>
    </location>
</feature>
<feature type="strand" evidence="45">
    <location>
        <begin position="943"/>
        <end position="948"/>
    </location>
</feature>
<feature type="strand" evidence="45">
    <location>
        <begin position="951"/>
        <end position="960"/>
    </location>
</feature>
<feature type="helix" evidence="45">
    <location>
        <begin position="966"/>
        <end position="969"/>
    </location>
</feature>
<feature type="strand" evidence="44">
    <location>
        <begin position="981"/>
        <end position="983"/>
    </location>
</feature>
<feature type="strand" evidence="45">
    <location>
        <begin position="984"/>
        <end position="986"/>
    </location>
</feature>
<feature type="helix" evidence="45">
    <location>
        <begin position="987"/>
        <end position="996"/>
    </location>
</feature>
<feature type="strand" evidence="46">
    <location>
        <begin position="999"/>
        <end position="1001"/>
    </location>
</feature>
<feature type="helix" evidence="45">
    <location>
        <begin position="1003"/>
        <end position="1005"/>
    </location>
</feature>
<feature type="strand" evidence="45">
    <location>
        <begin position="1008"/>
        <end position="1012"/>
    </location>
</feature>
<feature type="strand" evidence="45">
    <location>
        <begin position="1015"/>
        <end position="1021"/>
    </location>
</feature>
<feature type="helix" evidence="45">
    <location>
        <begin position="1026"/>
        <end position="1039"/>
    </location>
</feature>
<feature type="strand" evidence="45">
    <location>
        <begin position="1047"/>
        <end position="1057"/>
    </location>
</feature>
<feature type="helix" evidence="45">
    <location>
        <begin position="1059"/>
        <end position="1065"/>
    </location>
</feature>
<feature type="strand" evidence="45">
    <location>
        <begin position="1074"/>
        <end position="1081"/>
    </location>
</feature>
<feature type="turn" evidence="45">
    <location>
        <begin position="1082"/>
        <end position="1085"/>
    </location>
</feature>
<feature type="strand" evidence="45">
    <location>
        <begin position="1086"/>
        <end position="1089"/>
    </location>
</feature>
<feature type="strand" evidence="45">
    <location>
        <begin position="1092"/>
        <end position="1101"/>
    </location>
</feature>
<feature type="strand" evidence="42">
    <location>
        <begin position="1113"/>
        <end position="1127"/>
    </location>
</feature>
<feature type="turn" evidence="42">
    <location>
        <begin position="1128"/>
        <end position="1130"/>
    </location>
</feature>
<feature type="helix" evidence="42">
    <location>
        <begin position="1132"/>
        <end position="1149"/>
    </location>
</feature>
<feature type="helix" evidence="41">
    <location>
        <begin position="1173"/>
        <end position="1175"/>
    </location>
</feature>
<feature type="helix" evidence="42">
    <location>
        <begin position="1177"/>
        <end position="1187"/>
    </location>
</feature>
<feature type="helix" evidence="42">
    <location>
        <begin position="1200"/>
        <end position="1205"/>
    </location>
</feature>
<feature type="helix" evidence="42">
    <location>
        <begin position="1206"/>
        <end position="1211"/>
    </location>
</feature>
<feature type="turn" evidence="42">
    <location>
        <begin position="1213"/>
        <end position="1217"/>
    </location>
</feature>
<feature type="helix" evidence="42">
    <location>
        <begin position="1218"/>
        <end position="1220"/>
    </location>
</feature>
<feature type="helix" evidence="42">
    <location>
        <begin position="1222"/>
        <end position="1233"/>
    </location>
</feature>
<feature type="strand" evidence="42">
    <location>
        <begin position="1236"/>
        <end position="1246"/>
    </location>
</feature>
<feature type="helix" evidence="42">
    <location>
        <begin position="1247"/>
        <end position="1250"/>
    </location>
</feature>
<feature type="turn" evidence="42">
    <location>
        <begin position="1253"/>
        <end position="1255"/>
    </location>
</feature>
<feature type="helix" evidence="42">
    <location>
        <begin position="1256"/>
        <end position="1260"/>
    </location>
</feature>
<feature type="strand" evidence="41">
    <location>
        <begin position="1263"/>
        <end position="1265"/>
    </location>
</feature>
<feature type="strand" evidence="42">
    <location>
        <begin position="1267"/>
        <end position="1276"/>
    </location>
</feature>
<feature type="helix" evidence="42">
    <location>
        <begin position="1277"/>
        <end position="1283"/>
    </location>
</feature>
<feature type="helix" evidence="42">
    <location>
        <begin position="1284"/>
        <end position="1289"/>
    </location>
</feature>
<feature type="strand" evidence="42">
    <location>
        <begin position="1293"/>
        <end position="1296"/>
    </location>
</feature>
<feature type="helix" evidence="42">
    <location>
        <begin position="1305"/>
        <end position="1307"/>
    </location>
</feature>
<feature type="strand" evidence="42">
    <location>
        <begin position="1309"/>
        <end position="1316"/>
    </location>
</feature>
<feature type="turn" evidence="42">
    <location>
        <begin position="1317"/>
        <end position="1319"/>
    </location>
</feature>
<feature type="helix" evidence="42">
    <location>
        <begin position="1325"/>
        <end position="1334"/>
    </location>
</feature>
<feature type="strand" evidence="42">
    <location>
        <begin position="1336"/>
        <end position="1347"/>
    </location>
</feature>
<feature type="helix" evidence="42">
    <location>
        <begin position="1352"/>
        <end position="1360"/>
    </location>
</feature>
<feature type="helix" evidence="42">
    <location>
        <begin position="1374"/>
        <end position="1383"/>
    </location>
</feature>
<feature type="strand" evidence="42">
    <location>
        <begin position="1387"/>
        <end position="1394"/>
    </location>
</feature>
<feature type="strand" evidence="42">
    <location>
        <begin position="1397"/>
        <end position="1404"/>
    </location>
</feature>
<feature type="strand" evidence="42">
    <location>
        <begin position="1413"/>
        <end position="1416"/>
    </location>
</feature>
<feature type="helix" evidence="42">
    <location>
        <begin position="1424"/>
        <end position="1433"/>
    </location>
</feature>
<feature type="strand" evidence="42">
    <location>
        <begin position="1441"/>
        <end position="1445"/>
    </location>
</feature>
<feature type="helix" evidence="42">
    <location>
        <begin position="1453"/>
        <end position="1460"/>
    </location>
</feature>
<feature type="helix" evidence="42">
    <location>
        <begin position="1466"/>
        <end position="1468"/>
    </location>
</feature>
<feature type="strand" evidence="42">
    <location>
        <begin position="1469"/>
        <end position="1474"/>
    </location>
</feature>
<feature type="strand" evidence="44">
    <location>
        <begin position="1479"/>
        <end position="1482"/>
    </location>
</feature>
<feature type="helix" evidence="42">
    <location>
        <begin position="1491"/>
        <end position="1499"/>
    </location>
</feature>
<feature type="strand" evidence="42">
    <location>
        <begin position="1502"/>
        <end position="1507"/>
    </location>
</feature>
<feature type="strand" evidence="42">
    <location>
        <begin position="1510"/>
        <end position="1518"/>
    </location>
</feature>
<feature type="strand" evidence="46">
    <location>
        <begin position="1525"/>
        <end position="1529"/>
    </location>
</feature>
<feature type="strand" evidence="38">
    <location>
        <begin position="1531"/>
        <end position="1537"/>
    </location>
</feature>
<feature type="helix" evidence="38">
    <location>
        <begin position="1541"/>
        <end position="1543"/>
    </location>
</feature>
<feature type="strand" evidence="38">
    <location>
        <begin position="1544"/>
        <end position="1548"/>
    </location>
</feature>
<feature type="helix" evidence="46">
    <location>
        <begin position="1550"/>
        <end position="1553"/>
    </location>
</feature>
<feature type="strand" evidence="38">
    <location>
        <begin position="1562"/>
        <end position="1570"/>
    </location>
</feature>
<feature type="helix" evidence="38">
    <location>
        <begin position="1573"/>
        <end position="1579"/>
    </location>
</feature>
<feature type="helix" evidence="38">
    <location>
        <begin position="1585"/>
        <end position="1587"/>
    </location>
</feature>
<feature type="helix" evidence="38">
    <location>
        <begin position="1589"/>
        <end position="1592"/>
    </location>
</feature>
<feature type="strand" evidence="38">
    <location>
        <begin position="1602"/>
        <end position="1606"/>
    </location>
</feature>
<feature type="strand" evidence="38">
    <location>
        <begin position="1612"/>
        <end position="1616"/>
    </location>
</feature>
<feature type="strand" evidence="38">
    <location>
        <begin position="1622"/>
        <end position="1628"/>
    </location>
</feature>
<feature type="helix" evidence="38">
    <location>
        <begin position="1630"/>
        <end position="1632"/>
    </location>
</feature>
<feature type="strand" evidence="38">
    <location>
        <begin position="1633"/>
        <end position="1635"/>
    </location>
</feature>
<feature type="helix" evidence="38">
    <location>
        <begin position="1642"/>
        <end position="1645"/>
    </location>
</feature>
<feature type="helix" evidence="38">
    <location>
        <begin position="1649"/>
        <end position="1659"/>
    </location>
</feature>
<feature type="turn" evidence="38">
    <location>
        <begin position="1660"/>
        <end position="1663"/>
    </location>
</feature>
<feature type="strand" evidence="38">
    <location>
        <begin position="1670"/>
        <end position="1675"/>
    </location>
</feature>
<feature type="helix" evidence="38">
    <location>
        <begin position="1679"/>
        <end position="1690"/>
    </location>
</feature>
<feature type="strand" evidence="38">
    <location>
        <begin position="1694"/>
        <end position="1701"/>
    </location>
</feature>
<feature type="helix" evidence="38">
    <location>
        <begin position="1702"/>
        <end position="1711"/>
    </location>
</feature>
<feature type="helix" evidence="38">
    <location>
        <begin position="1717"/>
        <end position="1719"/>
    </location>
</feature>
<feature type="strand" evidence="38">
    <location>
        <begin position="1720"/>
        <end position="1722"/>
    </location>
</feature>
<feature type="strand" evidence="39">
    <location>
        <begin position="1723"/>
        <end position="1726"/>
    </location>
</feature>
<feature type="helix" evidence="38">
    <location>
        <begin position="1728"/>
        <end position="1735"/>
    </location>
</feature>
<feature type="turn" evidence="38">
    <location>
        <begin position="1736"/>
        <end position="1738"/>
    </location>
</feature>
<feature type="strand" evidence="38">
    <location>
        <begin position="1741"/>
        <end position="1746"/>
    </location>
</feature>
<feature type="turn" evidence="39">
    <location>
        <begin position="1747"/>
        <end position="1751"/>
    </location>
</feature>
<feature type="helix" evidence="38">
    <location>
        <begin position="1753"/>
        <end position="1757"/>
    </location>
</feature>
<feature type="strand" evidence="38">
    <location>
        <begin position="1760"/>
        <end position="1769"/>
    </location>
</feature>
<feature type="helix" evidence="46">
    <location>
        <begin position="1772"/>
        <end position="1775"/>
    </location>
</feature>
<feature type="strand" evidence="46">
    <location>
        <begin position="1779"/>
        <end position="1781"/>
    </location>
</feature>
<feature type="turn" evidence="38">
    <location>
        <begin position="1784"/>
        <end position="1788"/>
    </location>
</feature>
<feature type="strand" evidence="38">
    <location>
        <begin position="1790"/>
        <end position="1794"/>
    </location>
</feature>
<feature type="helix" evidence="38">
    <location>
        <begin position="1796"/>
        <end position="1799"/>
    </location>
</feature>
<feature type="turn" evidence="39">
    <location>
        <begin position="1801"/>
        <end position="1803"/>
    </location>
</feature>
<feature type="helix" evidence="38">
    <location>
        <begin position="1805"/>
        <end position="1819"/>
    </location>
</feature>
<feature type="strand" evidence="38">
    <location>
        <begin position="1828"/>
        <end position="1832"/>
    </location>
</feature>
<feature type="helix" evidence="38">
    <location>
        <begin position="1833"/>
        <end position="1835"/>
    </location>
</feature>
<feature type="helix" evidence="38">
    <location>
        <begin position="1836"/>
        <end position="1845"/>
    </location>
</feature>
<feature type="strand" evidence="38">
    <location>
        <begin position="1849"/>
        <end position="1857"/>
    </location>
</feature>
<feature type="strand" evidence="46">
    <location>
        <begin position="1873"/>
        <end position="1876"/>
    </location>
</feature>
<feature type="strand" evidence="42">
    <location>
        <begin position="1885"/>
        <end position="1890"/>
    </location>
</feature>
<feature type="turn" evidence="42">
    <location>
        <begin position="1891"/>
        <end position="1893"/>
    </location>
</feature>
<feature type="helix" evidence="42">
    <location>
        <begin position="1895"/>
        <end position="1906"/>
    </location>
</feature>
<feature type="strand" evidence="42">
    <location>
        <begin position="1911"/>
        <end position="1915"/>
    </location>
</feature>
<feature type="helix" evidence="42">
    <location>
        <begin position="1923"/>
        <end position="1934"/>
    </location>
</feature>
<feature type="strand" evidence="42">
    <location>
        <begin position="1938"/>
        <end position="1942"/>
    </location>
</feature>
<feature type="helix" evidence="42">
    <location>
        <begin position="1949"/>
        <end position="1962"/>
    </location>
</feature>
<feature type="strand" evidence="42">
    <location>
        <begin position="1963"/>
        <end position="1970"/>
    </location>
</feature>
<feature type="helix" evidence="42">
    <location>
        <begin position="1980"/>
        <end position="1982"/>
    </location>
</feature>
<feature type="helix" evidence="42">
    <location>
        <begin position="1985"/>
        <end position="2009"/>
    </location>
</feature>
<feature type="strand" evidence="42">
    <location>
        <begin position="2015"/>
        <end position="2021"/>
    </location>
</feature>
<feature type="helix" evidence="42">
    <location>
        <begin position="2022"/>
        <end position="2025"/>
    </location>
</feature>
<feature type="helix" evidence="42">
    <location>
        <begin position="2032"/>
        <end position="2050"/>
    </location>
</feature>
<feature type="strand" evidence="42">
    <location>
        <begin position="2056"/>
        <end position="2060"/>
    </location>
</feature>
<feature type="strand" evidence="42">
    <location>
        <begin position="2065"/>
        <end position="2067"/>
    </location>
</feature>
<feature type="turn" evidence="42">
    <location>
        <begin position="2068"/>
        <end position="2070"/>
    </location>
</feature>
<feature type="strand" evidence="41">
    <location>
        <begin position="2075"/>
        <end position="2077"/>
    </location>
</feature>
<feature type="helix" evidence="42">
    <location>
        <begin position="2088"/>
        <end position="2099"/>
    </location>
</feature>
<feature type="strand" evidence="42">
    <location>
        <begin position="2104"/>
        <end position="2111"/>
    </location>
</feature>
<feature type="helix" evidence="34">
    <location>
        <begin position="2127"/>
        <end position="2134"/>
    </location>
</feature>
<feature type="turn" evidence="34">
    <location>
        <begin position="2149"/>
        <end position="2153"/>
    </location>
</feature>
<feature type="helix" evidence="34">
    <location>
        <begin position="2156"/>
        <end position="2170"/>
    </location>
</feature>
<feature type="helix" evidence="34">
    <location>
        <begin position="2176"/>
        <end position="2180"/>
    </location>
</feature>
<feature type="helix" evidence="34">
    <location>
        <begin position="2184"/>
        <end position="2192"/>
    </location>
</feature>
<feature type="helix" evidence="37">
    <location>
        <begin position="2219"/>
        <end position="2222"/>
    </location>
</feature>
<feature type="strand" evidence="37">
    <location>
        <begin position="2230"/>
        <end position="2233"/>
    </location>
</feature>
<feature type="strand" evidence="37">
    <location>
        <begin position="2239"/>
        <end position="2241"/>
    </location>
</feature>
<feature type="strand" evidence="37">
    <location>
        <begin position="2244"/>
        <end position="2247"/>
    </location>
</feature>
<feature type="helix" evidence="37">
    <location>
        <begin position="2255"/>
        <end position="2257"/>
    </location>
</feature>
<feature type="helix" evidence="37">
    <location>
        <begin position="2258"/>
        <end position="2263"/>
    </location>
</feature>
<feature type="strand" evidence="37">
    <location>
        <begin position="2268"/>
        <end position="2271"/>
    </location>
</feature>
<feature type="helix" evidence="37">
    <location>
        <begin position="2282"/>
        <end position="2293"/>
    </location>
</feature>
<feature type="turn" evidence="37">
    <location>
        <begin position="2294"/>
        <end position="2296"/>
    </location>
</feature>
<feature type="strand" evidence="37">
    <location>
        <begin position="2303"/>
        <end position="2307"/>
    </location>
</feature>
<feature type="helix" evidence="37">
    <location>
        <begin position="2309"/>
        <end position="2325"/>
    </location>
</feature>
<feature type="strand" evidence="37">
    <location>
        <begin position="2333"/>
        <end position="2338"/>
    </location>
</feature>
<feature type="helix" evidence="37">
    <location>
        <begin position="2343"/>
        <end position="2352"/>
    </location>
</feature>
<feature type="helix" evidence="37">
    <location>
        <begin position="2360"/>
        <end position="2375"/>
    </location>
</feature>
<feature type="helix" evidence="37">
    <location>
        <begin position="2380"/>
        <end position="2387"/>
    </location>
</feature>
<feature type="strand" evidence="37">
    <location>
        <begin position="2390"/>
        <end position="2392"/>
    </location>
</feature>
<feature type="helix" evidence="37">
    <location>
        <begin position="2393"/>
        <end position="2407"/>
    </location>
</feature>
<feature type="helix" evidence="37">
    <location>
        <begin position="2413"/>
        <end position="2432"/>
    </location>
</feature>
<feature type="strand" evidence="37">
    <location>
        <begin position="2443"/>
        <end position="2447"/>
    </location>
</feature>
<feature type="strand" evidence="40">
    <location>
        <begin position="2453"/>
        <end position="2458"/>
    </location>
</feature>
<feature type="turn" evidence="37">
    <location>
        <begin position="2459"/>
        <end position="2463"/>
    </location>
</feature>
<feature type="helix" evidence="37">
    <location>
        <begin position="2464"/>
        <end position="2466"/>
    </location>
</feature>
<feature type="strand" evidence="43">
    <location>
        <begin position="2468"/>
        <end position="2470"/>
    </location>
</feature>
<feature type="strand" evidence="37">
    <location>
        <begin position="2472"/>
        <end position="2476"/>
    </location>
</feature>
<feature type="helix" evidence="37">
    <location>
        <begin position="2483"/>
        <end position="2485"/>
    </location>
</feature>
<feature type="helix" evidence="37">
    <location>
        <begin position="2487"/>
        <end position="2499"/>
    </location>
</feature>
<reference key="1">
    <citation type="journal article" date="1995" name="Proc. Natl. Acad. Sci. U.S.A.">
        <title>Human fatty acid synthase: properties and molecular cloning.</title>
        <authorList>
            <person name="Jayakumar A."/>
            <person name="Tai M.-H."/>
            <person name="Huang W.-Y."/>
            <person name="Al-Feel W."/>
            <person name="Hsu M."/>
            <person name="Abu-Elheiga L."/>
            <person name="Chirala S.S."/>
            <person name="Wakil S.J."/>
        </authorList>
    </citation>
    <scope>NUCLEOTIDE SEQUENCE [MRNA]</scope>
    <scope>FUNCTION</scope>
    <scope>CATALYTIC ACTIVITY</scope>
    <scope>BIOPHYSICOCHEMICAL PROPERTIES</scope>
    <scope>PHOSPHOPANTETHEINYLATION AT SER-2156</scope>
    <scope>TISSUE SPECIFICITY</scope>
    <source>
        <tissue>Brain</tissue>
    </source>
</reference>
<reference key="2">
    <citation type="submission" date="1995-06" db="EMBL/GenBank/DDBJ databases">
        <title>Molecular cloning of tumor-associated human fatty acid synthase.</title>
        <authorList>
            <person name="Hennigar R.A."/>
            <person name="Jenner K.H."/>
            <person name="Heine H.S."/>
            <person name="Kayler A.E."/>
            <person name="Wood F.D."/>
            <person name="Kuhajda F.P."/>
            <person name="Pasternack G.R."/>
        </authorList>
    </citation>
    <scope>NUCLEOTIDE SEQUENCE [MRNA]</scope>
</reference>
<reference key="3">
    <citation type="submission" date="2003-10" db="EMBL/GenBank/DDBJ databases">
        <title>Recharacterization of the human fatty acid synthase (FAS) gene.</title>
        <authorList>
            <person name="Mao J."/>
            <person name="Wakil S.J."/>
        </authorList>
    </citation>
    <scope>NUCLEOTIDE SEQUENCE [MRNA]</scope>
</reference>
<reference key="4">
    <citation type="submission" date="2005-03" db="EMBL/GenBank/DDBJ databases">
        <title>Preparation of a set of expression-ready clones of mammalian long cDNAs encoding large proteins by the ORF trap cloning method.</title>
        <authorList>
            <person name="Nakajima D."/>
            <person name="Saito K."/>
            <person name="Yamakawa H."/>
            <person name="Kikuno R.F."/>
            <person name="Nakayama M."/>
            <person name="Ohara R."/>
            <person name="Okazaki N."/>
            <person name="Koga H."/>
            <person name="Nagase T."/>
            <person name="Ohara O."/>
        </authorList>
    </citation>
    <scope>NUCLEOTIDE SEQUENCE [LARGE SCALE MRNA]</scope>
    <source>
        <tissue>Brain</tissue>
    </source>
</reference>
<reference key="5">
    <citation type="journal article" date="2006" name="Nature">
        <title>DNA sequence of human chromosome 17 and analysis of rearrangement in the human lineage.</title>
        <authorList>
            <person name="Zody M.C."/>
            <person name="Garber M."/>
            <person name="Adams D.J."/>
            <person name="Sharpe T."/>
            <person name="Harrow J."/>
            <person name="Lupski J.R."/>
            <person name="Nicholson C."/>
            <person name="Searle S.M."/>
            <person name="Wilming L."/>
            <person name="Young S.K."/>
            <person name="Abouelleil A."/>
            <person name="Allen N.R."/>
            <person name="Bi W."/>
            <person name="Bloom T."/>
            <person name="Borowsky M.L."/>
            <person name="Bugalter B.E."/>
            <person name="Butler J."/>
            <person name="Chang J.L."/>
            <person name="Chen C.-K."/>
            <person name="Cook A."/>
            <person name="Corum B."/>
            <person name="Cuomo C.A."/>
            <person name="de Jong P.J."/>
            <person name="DeCaprio D."/>
            <person name="Dewar K."/>
            <person name="FitzGerald M."/>
            <person name="Gilbert J."/>
            <person name="Gibson R."/>
            <person name="Gnerre S."/>
            <person name="Goldstein S."/>
            <person name="Grafham D.V."/>
            <person name="Grocock R."/>
            <person name="Hafez N."/>
            <person name="Hagopian D.S."/>
            <person name="Hart E."/>
            <person name="Norman C.H."/>
            <person name="Humphray S."/>
            <person name="Jaffe D.B."/>
            <person name="Jones M."/>
            <person name="Kamal M."/>
            <person name="Khodiyar V.K."/>
            <person name="LaButti K."/>
            <person name="Laird G."/>
            <person name="Lehoczky J."/>
            <person name="Liu X."/>
            <person name="Lokyitsang T."/>
            <person name="Loveland J."/>
            <person name="Lui A."/>
            <person name="Macdonald P."/>
            <person name="Major J.E."/>
            <person name="Matthews L."/>
            <person name="Mauceli E."/>
            <person name="McCarroll S.A."/>
            <person name="Mihalev A.H."/>
            <person name="Mudge J."/>
            <person name="Nguyen C."/>
            <person name="Nicol R."/>
            <person name="O'Leary S.B."/>
            <person name="Osoegawa K."/>
            <person name="Schwartz D.C."/>
            <person name="Shaw-Smith C."/>
            <person name="Stankiewicz P."/>
            <person name="Steward C."/>
            <person name="Swarbreck D."/>
            <person name="Venkataraman V."/>
            <person name="Whittaker C.A."/>
            <person name="Yang X."/>
            <person name="Zimmer A.R."/>
            <person name="Bradley A."/>
            <person name="Hubbard T."/>
            <person name="Birren B.W."/>
            <person name="Rogers J."/>
            <person name="Lander E.S."/>
            <person name="Nusbaum C."/>
        </authorList>
    </citation>
    <scope>NUCLEOTIDE SEQUENCE [LARGE SCALE GENOMIC DNA]</scope>
</reference>
<reference key="6">
    <citation type="journal article" date="2004" name="Genome Res.">
        <title>The status, quality, and expansion of the NIH full-length cDNA project: the Mammalian Gene Collection (MGC).</title>
        <authorList>
            <consortium name="The MGC Project Team"/>
        </authorList>
    </citation>
    <scope>NUCLEOTIDE SEQUENCE [LARGE SCALE MRNA]</scope>
    <source>
        <tissue>Eye</tissue>
    </source>
</reference>
<reference key="7">
    <citation type="submission" date="2005-07" db="UniProtKB">
        <authorList>
            <person name="Bienvenut W.V."/>
        </authorList>
    </citation>
    <scope>PROTEIN SEQUENCE OF 1-12; 647-666; 791-802; 1242-1255; 1338-1349 AND 2126-2138</scope>
    <scope>ACETYLATION AT MET-1</scope>
    <scope>IDENTIFICATION BY MASS SPECTROMETRY</scope>
    <source>
        <tissue>B-cell lymphoma</tissue>
    </source>
</reference>
<reference key="8">
    <citation type="journal article" date="1994" name="Proc. Natl. Acad. Sci. U.S.A.">
        <title>Fatty acid synthesis: a potential selective target for antineoplastic therapy.</title>
        <authorList>
            <person name="Kuhajda F.P."/>
            <person name="Jenner K."/>
            <person name="Wood F.D."/>
            <person name="Hennigar R.A."/>
            <person name="Jacobs L.B."/>
            <person name="Dick J.D."/>
            <person name="Pasternack G.R."/>
        </authorList>
    </citation>
    <scope>PROTEIN SEQUENCE OF 753-758 AND 1285-1297</scope>
</reference>
<reference key="9">
    <citation type="journal article" date="1995" name="J. Lipid Res.">
        <title>Human fatty acid synthase mRNA: tissue distribution, genetic mapping, and kinetics of decay after glucose deprivation.</title>
        <authorList>
            <person name="Semenkovich C.F."/>
            <person name="Coleman T."/>
            <person name="Fiedorek F.T. Jr."/>
        </authorList>
    </citation>
    <scope>NUCLEOTIDE SEQUENCE [MRNA] OF 2047-2511</scope>
    <scope>TISSUE SPECIFICITY</scope>
</reference>
<reference key="10">
    <citation type="journal article" date="1996" name="Proc. Natl. Acad. Sci. U.S.A.">
        <title>Cloning and expression of the multifunctional human fatty acid synthase and its subdomains in Escherichia coli.</title>
        <authorList>
            <person name="Jayakumar A."/>
            <person name="Huang W.Y."/>
            <person name="Raetz B."/>
            <person name="Chirala S.S."/>
            <person name="Wakil S.J."/>
        </authorList>
    </citation>
    <scope>FUNCTION</scope>
    <scope>CATALYTIC ACTIVITY</scope>
</reference>
<reference key="11">
    <citation type="journal article" date="1997" name="Proc. Natl. Acad. Sci. U.S.A.">
        <title>Human fatty acid synthase: assembling recombinant halves of the fatty acid synthase subunit protein reconstitutes enzyme activity.</title>
        <authorList>
            <person name="Jayakumar A."/>
            <person name="Chirala S.S."/>
            <person name="Wakil S.J."/>
        </authorList>
    </citation>
    <scope>FUNCTION</scope>
    <scope>CATALYTIC ACTIVITY</scope>
</reference>
<reference key="12">
    <citation type="journal article" date="2005" name="J. Biol. Chem.">
        <title>Substrate recognition by the human fatty-acid synthase.</title>
        <authorList>
            <person name="Carlisle-Moore L."/>
            <person name="Gordon C.R."/>
            <person name="Machutta C.A."/>
            <person name="Miller W.T."/>
            <person name="Tonge P.J."/>
        </authorList>
    </citation>
    <scope>FUNCTION</scope>
    <scope>CATALYTIC ACTIVITY</scope>
    <scope>BIOPHYSICOCHEMICAL PROPERTIES</scope>
</reference>
<reference key="13">
    <citation type="journal article" date="2006" name="Br. J. Cancer">
        <title>Fatty acid synthase: a novel target for antiglioma therapy.</title>
        <authorList>
            <person name="Zhao W."/>
            <person name="Kridel S."/>
            <person name="Thorburn A."/>
            <person name="Kooshki M."/>
            <person name="Little J."/>
            <person name="Hebbar S."/>
            <person name="Robbins M."/>
        </authorList>
    </citation>
    <scope>FUNCTION</scope>
    <scope>ACTIVITY REGULATION</scope>
</reference>
<reference key="14">
    <citation type="journal article" date="2016" name="J. Lipid Res.">
        <title>S-nitrosylation of fatty acid synthase regulates its activity through dimerization.</title>
        <authorList>
            <person name="Choi M.S."/>
            <person name="Jung J.Y."/>
            <person name="Kim H.J."/>
            <person name="Ham M.R."/>
            <person name="Lee T.R."/>
            <person name="Shin D.W."/>
        </authorList>
    </citation>
    <scope>FUNCTION</scope>
    <scope>CATALYTIC ACTIVITY</scope>
    <scope>ACTIVITY REGULATION</scope>
    <scope>S-NITROSYLATION AT CYS-1471 AND CYS-2091</scope>
</reference>
<reference key="15">
    <citation type="journal article" date="2003" name="Nature">
        <title>Proteomic characterization of the human centrosome by protein correlation profiling.</title>
        <authorList>
            <person name="Andersen J.S."/>
            <person name="Wilkinson C.J."/>
            <person name="Mayor T."/>
            <person name="Mortensen P."/>
            <person name="Nigg E.A."/>
            <person name="Mann M."/>
        </authorList>
    </citation>
    <scope>IDENTIFICATION BY MASS SPECTROMETRY</scope>
    <source>
        <tissue>Lymphoblast</tissue>
    </source>
</reference>
<reference key="16">
    <citation type="journal article" date="2006" name="J. Proteome Res.">
        <title>Proteomic and bioinformatic characterization of the biogenesis and function of melanosomes.</title>
        <authorList>
            <person name="Chi A."/>
            <person name="Valencia J.C."/>
            <person name="Hu Z.-Z."/>
            <person name="Watabe H."/>
            <person name="Yamaguchi H."/>
            <person name="Mangini N.J."/>
            <person name="Huang H."/>
            <person name="Canfield V.A."/>
            <person name="Cheng K.C."/>
            <person name="Yang F."/>
            <person name="Abe R."/>
            <person name="Yamagishi S."/>
            <person name="Shabanowitz J."/>
            <person name="Hearing V.J."/>
            <person name="Wu C."/>
            <person name="Appella E."/>
            <person name="Hunt D.F."/>
        </authorList>
    </citation>
    <scope>SUBCELLULAR LOCATION [LARGE SCALE ANALYSIS]</scope>
    <source>
        <tissue>Melanoma</tissue>
    </source>
</reference>
<reference key="17">
    <citation type="journal article" date="2006" name="Nat. Biotechnol.">
        <title>A probability-based approach for high-throughput protein phosphorylation analysis and site localization.</title>
        <authorList>
            <person name="Beausoleil S.A."/>
            <person name="Villen J."/>
            <person name="Gerber S.A."/>
            <person name="Rush J."/>
            <person name="Gygi S.P."/>
        </authorList>
    </citation>
    <scope>PHOSPHORYLATION [LARGE SCALE ANALYSIS] AT SER-2198 AND THR-2204</scope>
    <scope>IDENTIFICATION BY MASS SPECTROMETRY [LARGE SCALE ANALYSIS]</scope>
    <source>
        <tissue>Cervix carcinoma</tissue>
    </source>
</reference>
<reference key="18">
    <citation type="journal article" date="2008" name="Proc. Natl. Acad. Sci. U.S.A.">
        <title>A quantitative atlas of mitotic phosphorylation.</title>
        <authorList>
            <person name="Dephoure N."/>
            <person name="Zhou C."/>
            <person name="Villen J."/>
            <person name="Beausoleil S.A."/>
            <person name="Bakalarski C.E."/>
            <person name="Elledge S.J."/>
            <person name="Gygi S.P."/>
        </authorList>
    </citation>
    <scope>PHOSPHORYLATION [LARGE SCALE ANALYSIS] AT SER-207; SER-2198; THR-2204 AND SER-2236</scope>
    <scope>IDENTIFICATION BY MASS SPECTROMETRY [LARGE SCALE ANALYSIS]</scope>
    <source>
        <tissue>Cervix carcinoma</tissue>
    </source>
</reference>
<reference key="19">
    <citation type="journal article" date="2009" name="Anal. Chem.">
        <title>Lys-N and trypsin cover complementary parts of the phosphoproteome in a refined SCX-based approach.</title>
        <authorList>
            <person name="Gauci S."/>
            <person name="Helbig A.O."/>
            <person name="Slijper M."/>
            <person name="Krijgsveld J."/>
            <person name="Heck A.J."/>
            <person name="Mohammed S."/>
        </authorList>
    </citation>
    <scope>ACETYLATION [LARGE SCALE ANALYSIS] AT MET-1</scope>
    <scope>IDENTIFICATION BY MASS SPECTROMETRY [LARGE SCALE ANALYSIS]</scope>
</reference>
<reference key="20">
    <citation type="journal article" date="2009" name="Mol. Cell. Proteomics">
        <title>Large-scale proteomics analysis of the human kinome.</title>
        <authorList>
            <person name="Oppermann F.S."/>
            <person name="Gnad F."/>
            <person name="Olsen J.V."/>
            <person name="Hornberger R."/>
            <person name="Greff Z."/>
            <person name="Keri G."/>
            <person name="Mann M."/>
            <person name="Daub H."/>
        </authorList>
    </citation>
    <scope>PHOSPHORYLATION [LARGE SCALE ANALYSIS] AT THR-2204</scope>
    <scope>IDENTIFICATION BY MASS SPECTROMETRY [LARGE SCALE ANALYSIS]</scope>
</reference>
<reference key="21">
    <citation type="journal article" date="2009" name="Science">
        <title>Lysine acetylation targets protein complexes and co-regulates major cellular functions.</title>
        <authorList>
            <person name="Choudhary C."/>
            <person name="Kumar C."/>
            <person name="Gnad F."/>
            <person name="Nielsen M.L."/>
            <person name="Rehman M."/>
            <person name="Walther T.C."/>
            <person name="Olsen J.V."/>
            <person name="Mann M."/>
        </authorList>
    </citation>
    <scope>ACETYLATION [LARGE SCALE ANALYSIS] AT LYS-70; LYS-298; LYS-436; LYS-528; LYS-673; LYS-1704; LYS-1771; LYS-1847 AND LYS-1995</scope>
    <scope>IDENTIFICATION BY MASS SPECTROMETRY [LARGE SCALE ANALYSIS]</scope>
</reference>
<reference key="22">
    <citation type="journal article" date="2010" name="Sci. Signal.">
        <title>Quantitative phosphoproteomics reveals widespread full phosphorylation site occupancy during mitosis.</title>
        <authorList>
            <person name="Olsen J.V."/>
            <person name="Vermeulen M."/>
            <person name="Santamaria A."/>
            <person name="Kumar C."/>
            <person name="Miller M.L."/>
            <person name="Jensen L.J."/>
            <person name="Gnad F."/>
            <person name="Cox J."/>
            <person name="Jensen T.S."/>
            <person name="Nigg E.A."/>
            <person name="Brunak S."/>
            <person name="Mann M."/>
        </authorList>
    </citation>
    <scope>IDENTIFICATION BY MASS SPECTROMETRY [LARGE SCALE ANALYSIS]</scope>
    <source>
        <tissue>Cervix carcinoma</tissue>
    </source>
</reference>
<reference key="23">
    <citation type="journal article" date="2011" name="BMC Syst. Biol.">
        <title>Initial characterization of the human central proteome.</title>
        <authorList>
            <person name="Burkard T.R."/>
            <person name="Planyavsky M."/>
            <person name="Kaupe I."/>
            <person name="Breitwieser F.P."/>
            <person name="Buerckstuemmer T."/>
            <person name="Bennett K.L."/>
            <person name="Superti-Furga G."/>
            <person name="Colinge J."/>
        </authorList>
    </citation>
    <scope>IDENTIFICATION BY MASS SPECTROMETRY [LARGE SCALE ANALYSIS]</scope>
</reference>
<reference key="24">
    <citation type="journal article" date="2012" name="Mol. Cell. Proteomics">
        <title>Comparative large-scale characterisation of plant vs. mammal proteins reveals similar and idiosyncratic N-alpha acetylation features.</title>
        <authorList>
            <person name="Bienvenut W.V."/>
            <person name="Sumpton D."/>
            <person name="Martinez A."/>
            <person name="Lilla S."/>
            <person name="Espagne C."/>
            <person name="Meinnel T."/>
            <person name="Giglione C."/>
        </authorList>
    </citation>
    <scope>ACETYLATION [LARGE SCALE ANALYSIS] AT MET-1</scope>
    <scope>IDENTIFICATION BY MASS SPECTROMETRY [LARGE SCALE ANALYSIS]</scope>
</reference>
<reference key="25">
    <citation type="journal article" date="2013" name="J. Proteome Res.">
        <title>Toward a comprehensive characterization of a human cancer cell phosphoproteome.</title>
        <authorList>
            <person name="Zhou H."/>
            <person name="Di Palma S."/>
            <person name="Preisinger C."/>
            <person name="Peng M."/>
            <person name="Polat A.N."/>
            <person name="Heck A.J."/>
            <person name="Mohammed S."/>
        </authorList>
    </citation>
    <scope>PHOSPHORYLATION [LARGE SCALE ANALYSIS] AT SER-63; SER-207; SER-1411; SER-1584; SER-2198; THR-2204 AND THR-2215</scope>
    <scope>IDENTIFICATION BY MASS SPECTROMETRY [LARGE SCALE ANALYSIS]</scope>
    <source>
        <tissue>Cervix carcinoma</tissue>
        <tissue>Erythroleukemia</tissue>
    </source>
</reference>
<reference key="26">
    <citation type="journal article" date="2014" name="J. Proteomics">
        <title>An enzyme assisted RP-RPLC approach for in-depth analysis of human liver phosphoproteome.</title>
        <authorList>
            <person name="Bian Y."/>
            <person name="Song C."/>
            <person name="Cheng K."/>
            <person name="Dong M."/>
            <person name="Wang F."/>
            <person name="Huang J."/>
            <person name="Sun D."/>
            <person name="Wang L."/>
            <person name="Ye M."/>
            <person name="Zou H."/>
        </authorList>
    </citation>
    <scope>PHOSPHORYLATION [LARGE SCALE ANALYSIS] AT SER-1174; SER-1411; SER-2198; THR-2204 AND THR-2215</scope>
    <scope>IDENTIFICATION BY MASS SPECTROMETRY [LARGE SCALE ANALYSIS]</scope>
    <source>
        <tissue>Liver</tissue>
    </source>
</reference>
<reference key="27">
    <citation type="journal article" date="2014" name="Proc. Natl. Acad. Sci. U.S.A.">
        <title>Mapping of SUMO sites and analysis of SUMOylation changes induced by external stimuli.</title>
        <authorList>
            <person name="Impens F."/>
            <person name="Radoshevich L."/>
            <person name="Cossart P."/>
            <person name="Ribet D."/>
        </authorList>
    </citation>
    <scope>SUMOYLATION [LARGE SCALE ANALYSIS] AT LYS-2449</scope>
    <scope>IDENTIFICATION BY MASS SPECTROMETRY [LARGE SCALE ANALYSIS]</scope>
</reference>
<reference key="28">
    <citation type="journal article" date="2015" name="Proteomics">
        <title>N-terminome analysis of the human mitochondrial proteome.</title>
        <authorList>
            <person name="Vaca Jacome A.S."/>
            <person name="Rabilloud T."/>
            <person name="Schaeffer-Reiss C."/>
            <person name="Rompais M."/>
            <person name="Ayoub D."/>
            <person name="Lane L."/>
            <person name="Bairoch A."/>
            <person name="Van Dorsselaer A."/>
            <person name="Carapito C."/>
        </authorList>
    </citation>
    <scope>IDENTIFICATION BY MASS SPECTROMETRY [LARGE SCALE ANALYSIS]</scope>
</reference>
<reference key="29">
    <citation type="journal article" date="2021" name="Cell Rep.">
        <title>Inhibitors of VPS34 and fatty-acid metabolism suppress SARS-CoV-2 replication.</title>
        <authorList>
            <person name="Williams C.G."/>
            <person name="Jureka A.S."/>
            <person name="Silvas J.A."/>
            <person name="Nicolini A.M."/>
            <person name="Chvatal S.A."/>
            <person name="Carlson-Stevermer J."/>
            <person name="Oki J."/>
            <person name="Holden K."/>
            <person name="Basler C.F."/>
        </authorList>
    </citation>
    <scope>FUNCTION (MICROBIAL INFECTION)</scope>
</reference>
<reference key="30">
    <citation type="journal article" date="2002" name="Proc. Natl. Acad. Sci. U.S.A.">
        <title>Quaternary structure of human fatty acid synthase by electron cryomicroscopy.</title>
        <authorList>
            <person name="Brink J."/>
            <person name="Ludtke S.J."/>
            <person name="Yang C.Y."/>
            <person name="Gu Z.-W."/>
            <person name="Wakil S.J."/>
            <person name="Chiu W."/>
        </authorList>
    </citation>
    <scope>3D-STRUCTURE MODELING</scope>
    <scope>STRUCTURE BY ELECTRON MICROSCOPY</scope>
</reference>
<reference key="31">
    <citation type="journal article" date="2004" name="Proc. Natl. Acad. Sci. U.S.A.">
        <title>Human fatty acid synthase: structure and substrate selectivity of the thioesterase domain.</title>
        <authorList>
            <person name="Chakravarty B."/>
            <person name="Gu Z."/>
            <person name="Chirala S.S."/>
            <person name="Wakil S.J."/>
            <person name="Quiocho F.A."/>
        </authorList>
    </citation>
    <scope>X-RAY CRYSTALLOGRAPHY (2.6 ANGSTROMS) OF 2218-2502</scope>
    <scope>CATALYTIC ACTIVITY</scope>
</reference>
<reference key="32">
    <citation type="journal article" date="2007" name="Chem. Biol.">
        <title>Mechanism and substrate recognition of human holo ACP synthase.</title>
        <authorList>
            <person name="Bunkoczi G."/>
            <person name="Pasta S."/>
            <person name="Joshi A."/>
            <person name="Wu X."/>
            <person name="Kavanagh K.L."/>
            <person name="Smith S."/>
            <person name="Oppermann U."/>
        </authorList>
    </citation>
    <scope>X-RAY CRYSTALLOGRAPHY (2.7 ANGSTROMS) OF 2119-2207 IN COMPLEX WITH AASDHPPT AND COENZYME A</scope>
</reference>
<reference key="33">
    <citation type="journal article" date="2007" name="Nat. Struct. Mol. Biol.">
        <title>Crystal structure of the thioesterase domain of human fatty acid synthase inhibited by Orlistat.</title>
        <authorList>
            <person name="Pemble C.W. IV"/>
            <person name="Johnson L.C."/>
            <person name="Kridel S.J."/>
            <person name="Lowther W.T."/>
        </authorList>
    </citation>
    <scope>X-RAY CRYSTALLOGRAPHY (2.3 ANGSTROMS) OF 2200-2511 IN COMPLEX WITH ORLISTAT</scope>
    <scope>ACTIVE SITE FOR THIOESTERASE ACTIVITY</scope>
</reference>
<reference key="34">
    <citation type="submission" date="2009-02" db="PDB data bank">
        <title>Structure of the MAT domain of human FAS with malonyl-CoA.</title>
        <authorList>
            <consortium name="Structural genomics consortium (SGC)"/>
        </authorList>
    </citation>
    <scope>X-RAY CRYSTALLOGRAPHY (2.4 ANGSTROMS) OF 422-831 IN COMPLEX WITH MALONYL-COENZYME A</scope>
</reference>
<reference evidence="24" key="35">
    <citation type="journal article" date="2009" name="Chem. Biol.">
        <title>Structural basis for different specificities of acyltransferases associated with the human cytosolic and mitochondrial fatty acid synthases.</title>
        <authorList>
            <person name="Bunkoczi G."/>
            <person name="Misquitta S."/>
            <person name="Wu X."/>
            <person name="Lee W.H."/>
            <person name="Rojkova A."/>
            <person name="Kochan G."/>
            <person name="Kavanagh K.L."/>
            <person name="Oppermann U."/>
            <person name="Smith S."/>
        </authorList>
    </citation>
    <scope>X-RAY CRYSTALLOGRAPHY (2.81 ANGSTROMS) OF 422-823</scope>
</reference>
<reference key="36">
    <citation type="journal article" date="2017" name="Hum. Mol. Genet.">
        <title>New gain-of-function mutation shows CACNA1D as recurrently mutated gene in autism spectrum disorders and epilepsy.</title>
        <authorList>
            <person name="Pinggera A."/>
            <person name="Mackenroth L."/>
            <person name="Rump A."/>
            <person name="Schallner J."/>
            <person name="Beleggia F."/>
            <person name="Wollnik B."/>
            <person name="Striessnig J."/>
        </authorList>
    </citation>
    <scope>VARIANT HIS-477</scope>
</reference>
<proteinExistence type="evidence at protein level"/>
<comment type="function">
    <text evidence="9 10 14 17 19 20">Fatty acid synthetase is a multifunctional enzyme that catalyzes the de novo biosynthesis of long-chain saturated fatty acids starting from acetyl-CoA and malonyl-CoA in the presence of NADPH. This multifunctional protein contains 7 catalytic activities and a site for the binding of the prosthetic group 4'-phosphopantetheine of the acyl carrier protein ([ACP]) domain.</text>
</comment>
<comment type="function">
    <text evidence="16">(Microbial infection) Fatty acid synthetase activity is required for SARS coronavirus-2/SARS-CoV-2 replication.</text>
</comment>
<comment type="catalytic activity">
    <reaction evidence="9 14 17 19 20">
        <text>acetyl-CoA + n malonyl-CoA + 2n NADPH + 2n H(+) = a long-chain fatty acid + (n+1) CoA + n CO2 + 2n NADP(+).</text>
        <dbReference type="EC" id="2.3.1.85"/>
    </reaction>
</comment>
<comment type="catalytic activity">
    <reaction evidence="14 17 19 20">
        <text>holo-[ACP] + acetyl-CoA = acetyl-[ACP] + CoA</text>
        <dbReference type="Rhea" id="RHEA:41788"/>
        <dbReference type="Rhea" id="RHEA-COMP:9621"/>
        <dbReference type="Rhea" id="RHEA-COMP:9685"/>
        <dbReference type="ChEBI" id="CHEBI:57287"/>
        <dbReference type="ChEBI" id="CHEBI:57288"/>
        <dbReference type="ChEBI" id="CHEBI:64479"/>
        <dbReference type="ChEBI" id="CHEBI:78446"/>
        <dbReference type="EC" id="2.3.1.38"/>
    </reaction>
    <physiologicalReaction direction="left-to-right" evidence="14 17 19 20">
        <dbReference type="Rhea" id="RHEA:41789"/>
    </physiologicalReaction>
</comment>
<comment type="catalytic activity">
    <reaction evidence="14 17 19 20">
        <text>holo-[ACP] + malonyl-CoA = malonyl-[ACP] + CoA</text>
        <dbReference type="Rhea" id="RHEA:41792"/>
        <dbReference type="Rhea" id="RHEA-COMP:9623"/>
        <dbReference type="Rhea" id="RHEA-COMP:9685"/>
        <dbReference type="ChEBI" id="CHEBI:57287"/>
        <dbReference type="ChEBI" id="CHEBI:57384"/>
        <dbReference type="ChEBI" id="CHEBI:64479"/>
        <dbReference type="ChEBI" id="CHEBI:78449"/>
        <dbReference type="EC" id="2.3.1.39"/>
    </reaction>
    <physiologicalReaction direction="left-to-right" evidence="14 17 19 20">
        <dbReference type="Rhea" id="RHEA:41793"/>
    </physiologicalReaction>
</comment>
<comment type="catalytic activity">
    <reaction evidence="14 17 19 20">
        <text>a fatty acyl-[ACP] + malonyl-[ACP] + H(+) = a 3-oxoacyl-[ACP] + holo-[ACP] + CO2</text>
        <dbReference type="Rhea" id="RHEA:22836"/>
        <dbReference type="Rhea" id="RHEA-COMP:9623"/>
        <dbReference type="Rhea" id="RHEA-COMP:9685"/>
        <dbReference type="Rhea" id="RHEA-COMP:9916"/>
        <dbReference type="Rhea" id="RHEA-COMP:14125"/>
        <dbReference type="ChEBI" id="CHEBI:15378"/>
        <dbReference type="ChEBI" id="CHEBI:16526"/>
        <dbReference type="ChEBI" id="CHEBI:64479"/>
        <dbReference type="ChEBI" id="CHEBI:78449"/>
        <dbReference type="ChEBI" id="CHEBI:78776"/>
        <dbReference type="ChEBI" id="CHEBI:138651"/>
        <dbReference type="EC" id="2.3.1.41"/>
    </reaction>
    <physiologicalReaction direction="left-to-right" evidence="14 17 19 20">
        <dbReference type="Rhea" id="RHEA:22837"/>
    </physiologicalReaction>
</comment>
<comment type="catalytic activity">
    <reaction evidence="14 17 19 20">
        <text>a (3R)-hydroxyacyl-[ACP] + NADP(+) = a 3-oxoacyl-[ACP] + NADPH + H(+)</text>
        <dbReference type="Rhea" id="RHEA:17397"/>
        <dbReference type="Rhea" id="RHEA-COMP:9916"/>
        <dbReference type="Rhea" id="RHEA-COMP:9945"/>
        <dbReference type="ChEBI" id="CHEBI:15378"/>
        <dbReference type="ChEBI" id="CHEBI:57783"/>
        <dbReference type="ChEBI" id="CHEBI:58349"/>
        <dbReference type="ChEBI" id="CHEBI:78776"/>
        <dbReference type="ChEBI" id="CHEBI:78827"/>
        <dbReference type="EC" id="1.1.1.100"/>
    </reaction>
    <physiologicalReaction direction="right-to-left" evidence="14 17 19 20">
        <dbReference type="Rhea" id="RHEA:17399"/>
    </physiologicalReaction>
</comment>
<comment type="catalytic activity">
    <reaction evidence="14 17 19 20">
        <text>a (3R)-hydroxyacyl-[ACP] = a (2E)-enoyl-[ACP] + H2O</text>
        <dbReference type="Rhea" id="RHEA:13097"/>
        <dbReference type="Rhea" id="RHEA-COMP:9925"/>
        <dbReference type="Rhea" id="RHEA-COMP:9945"/>
        <dbReference type="ChEBI" id="CHEBI:15377"/>
        <dbReference type="ChEBI" id="CHEBI:78784"/>
        <dbReference type="ChEBI" id="CHEBI:78827"/>
        <dbReference type="EC" id="4.2.1.59"/>
    </reaction>
    <physiologicalReaction direction="left-to-right" evidence="14 17 19 20">
        <dbReference type="Rhea" id="RHEA:13098"/>
    </physiologicalReaction>
</comment>
<comment type="catalytic activity">
    <reaction evidence="14 17 19 20">
        <text>a 2,3-saturated acyl-[ACP] + NADP(+) = a (2E)-enoyl-[ACP] + NADPH + H(+)</text>
        <dbReference type="Rhea" id="RHEA:22564"/>
        <dbReference type="Rhea" id="RHEA-COMP:9925"/>
        <dbReference type="Rhea" id="RHEA-COMP:9926"/>
        <dbReference type="ChEBI" id="CHEBI:15378"/>
        <dbReference type="ChEBI" id="CHEBI:57783"/>
        <dbReference type="ChEBI" id="CHEBI:58349"/>
        <dbReference type="ChEBI" id="CHEBI:78784"/>
        <dbReference type="ChEBI" id="CHEBI:78785"/>
        <dbReference type="EC" id="1.3.1.39"/>
    </reaction>
    <physiologicalReaction direction="right-to-left" evidence="14 17 19 20">
        <dbReference type="Rhea" id="RHEA:22566"/>
    </physiologicalReaction>
</comment>
<comment type="catalytic activity">
    <reaction evidence="8 17 19 20">
        <text>hexadecanoyl-[ACP] + H2O = hexadecanoate + holo-[ACP] + H(+)</text>
        <dbReference type="Rhea" id="RHEA:41932"/>
        <dbReference type="Rhea" id="RHEA-COMP:9652"/>
        <dbReference type="Rhea" id="RHEA-COMP:9685"/>
        <dbReference type="ChEBI" id="CHEBI:7896"/>
        <dbReference type="ChEBI" id="CHEBI:15377"/>
        <dbReference type="ChEBI" id="CHEBI:15378"/>
        <dbReference type="ChEBI" id="CHEBI:64479"/>
        <dbReference type="ChEBI" id="CHEBI:78483"/>
        <dbReference type="EC" id="3.1.2.14"/>
    </reaction>
    <physiologicalReaction direction="left-to-right" evidence="8 17 19 20">
        <dbReference type="Rhea" id="RHEA:41933"/>
    </physiologicalReaction>
</comment>
<comment type="catalytic activity">
    <reaction evidence="17 19 20">
        <text>acetyl-[ACP] + malonyl-[ACP] + H(+) = 3-oxobutanoyl-[ACP] + holo-[ACP] + CO2</text>
        <dbReference type="Rhea" id="RHEA:41800"/>
        <dbReference type="Rhea" id="RHEA-COMP:9621"/>
        <dbReference type="Rhea" id="RHEA-COMP:9623"/>
        <dbReference type="Rhea" id="RHEA-COMP:9625"/>
        <dbReference type="Rhea" id="RHEA-COMP:9685"/>
        <dbReference type="ChEBI" id="CHEBI:15378"/>
        <dbReference type="ChEBI" id="CHEBI:16526"/>
        <dbReference type="ChEBI" id="CHEBI:64479"/>
        <dbReference type="ChEBI" id="CHEBI:78446"/>
        <dbReference type="ChEBI" id="CHEBI:78449"/>
        <dbReference type="ChEBI" id="CHEBI:78450"/>
    </reaction>
    <physiologicalReaction direction="left-to-right" evidence="17 19 20">
        <dbReference type="Rhea" id="RHEA:41801"/>
    </physiologicalReaction>
</comment>
<comment type="catalytic activity">
    <reaction evidence="17 19 20">
        <text>3-oxobutanoyl-[ACP] + NADPH + H(+) = (3R)-hydroxybutanoyl-[ACP] + NADP(+)</text>
        <dbReference type="Rhea" id="RHEA:41804"/>
        <dbReference type="Rhea" id="RHEA-COMP:9625"/>
        <dbReference type="Rhea" id="RHEA-COMP:9626"/>
        <dbReference type="ChEBI" id="CHEBI:15378"/>
        <dbReference type="ChEBI" id="CHEBI:57783"/>
        <dbReference type="ChEBI" id="CHEBI:58349"/>
        <dbReference type="ChEBI" id="CHEBI:78450"/>
        <dbReference type="ChEBI" id="CHEBI:78451"/>
    </reaction>
    <physiologicalReaction direction="left-to-right" evidence="17 19 20">
        <dbReference type="Rhea" id="RHEA:41805"/>
    </physiologicalReaction>
</comment>
<comment type="catalytic activity">
    <reaction evidence="17 19 20">
        <text>(3R)-hydroxybutanoyl-[ACP] = (2E)-butenoyl-[ACP] + H2O</text>
        <dbReference type="Rhea" id="RHEA:41808"/>
        <dbReference type="Rhea" id="RHEA-COMP:9626"/>
        <dbReference type="Rhea" id="RHEA-COMP:9627"/>
        <dbReference type="ChEBI" id="CHEBI:15377"/>
        <dbReference type="ChEBI" id="CHEBI:78451"/>
        <dbReference type="ChEBI" id="CHEBI:78453"/>
    </reaction>
    <physiologicalReaction direction="left-to-right" evidence="17 19 20">
        <dbReference type="Rhea" id="RHEA:41809"/>
    </physiologicalReaction>
</comment>
<comment type="catalytic activity">
    <reaction evidence="17 19 20">
        <text>(2E)-butenoyl-[ACP] + NADPH + H(+) = butanoyl-[ACP] + NADP(+)</text>
        <dbReference type="Rhea" id="RHEA:41812"/>
        <dbReference type="Rhea" id="RHEA-COMP:9627"/>
        <dbReference type="Rhea" id="RHEA-COMP:9628"/>
        <dbReference type="ChEBI" id="CHEBI:15378"/>
        <dbReference type="ChEBI" id="CHEBI:57783"/>
        <dbReference type="ChEBI" id="CHEBI:58349"/>
        <dbReference type="ChEBI" id="CHEBI:78453"/>
        <dbReference type="ChEBI" id="CHEBI:78454"/>
    </reaction>
    <physiologicalReaction direction="left-to-right" evidence="17 19 20">
        <dbReference type="Rhea" id="RHEA:41813"/>
    </physiologicalReaction>
</comment>
<comment type="catalytic activity">
    <reaction evidence="17 19 20">
        <text>butanoyl-[ACP] + malonyl-[ACP] + H(+) = 3-oxohexanoyl-[ACP] + holo-[ACP] + CO2</text>
        <dbReference type="Rhea" id="RHEA:41820"/>
        <dbReference type="Rhea" id="RHEA-COMP:9623"/>
        <dbReference type="Rhea" id="RHEA-COMP:9628"/>
        <dbReference type="Rhea" id="RHEA-COMP:9629"/>
        <dbReference type="Rhea" id="RHEA-COMP:9685"/>
        <dbReference type="ChEBI" id="CHEBI:15378"/>
        <dbReference type="ChEBI" id="CHEBI:16526"/>
        <dbReference type="ChEBI" id="CHEBI:64479"/>
        <dbReference type="ChEBI" id="CHEBI:78449"/>
        <dbReference type="ChEBI" id="CHEBI:78454"/>
        <dbReference type="ChEBI" id="CHEBI:78456"/>
    </reaction>
    <physiologicalReaction direction="left-to-right" evidence="17 19 20">
        <dbReference type="Rhea" id="RHEA:41821"/>
    </physiologicalReaction>
</comment>
<comment type="catalytic activity">
    <reaction evidence="17 19 20">
        <text>3-oxohexanoyl-[ACP] + NADPH + H(+) = (3R)-hydroxyhexanoyl-[ACP] + NADP(+)</text>
        <dbReference type="Rhea" id="RHEA:41824"/>
        <dbReference type="Rhea" id="RHEA-COMP:9629"/>
        <dbReference type="Rhea" id="RHEA-COMP:9630"/>
        <dbReference type="ChEBI" id="CHEBI:15378"/>
        <dbReference type="ChEBI" id="CHEBI:57783"/>
        <dbReference type="ChEBI" id="CHEBI:58349"/>
        <dbReference type="ChEBI" id="CHEBI:78456"/>
        <dbReference type="ChEBI" id="CHEBI:78457"/>
    </reaction>
    <physiologicalReaction direction="left-to-right" evidence="17 19 20">
        <dbReference type="Rhea" id="RHEA:41825"/>
    </physiologicalReaction>
</comment>
<comment type="catalytic activity">
    <reaction evidence="17 19 20">
        <text>(3R)-hydroxyhexanoyl-[ACP] = (2E)-hexenoyl-[ACP] + H2O</text>
        <dbReference type="Rhea" id="RHEA:41828"/>
        <dbReference type="Rhea" id="RHEA-COMP:9630"/>
        <dbReference type="Rhea" id="RHEA-COMP:9631"/>
        <dbReference type="ChEBI" id="CHEBI:15377"/>
        <dbReference type="ChEBI" id="CHEBI:78457"/>
        <dbReference type="ChEBI" id="CHEBI:78458"/>
    </reaction>
    <physiologicalReaction direction="left-to-right" evidence="17 19 20">
        <dbReference type="Rhea" id="RHEA:41829"/>
    </physiologicalReaction>
</comment>
<comment type="catalytic activity">
    <reaction evidence="17 19 20">
        <text>(2E)-hexenoyl-[ACP] + NADPH + H(+) = hexanoyl-[ACP] + NADP(+)</text>
        <dbReference type="Rhea" id="RHEA:41832"/>
        <dbReference type="Rhea" id="RHEA-COMP:9631"/>
        <dbReference type="Rhea" id="RHEA-COMP:9632"/>
        <dbReference type="ChEBI" id="CHEBI:15378"/>
        <dbReference type="ChEBI" id="CHEBI:57783"/>
        <dbReference type="ChEBI" id="CHEBI:58349"/>
        <dbReference type="ChEBI" id="CHEBI:78458"/>
        <dbReference type="ChEBI" id="CHEBI:78459"/>
    </reaction>
    <physiologicalReaction direction="left-to-right" evidence="17 19 20">
        <dbReference type="Rhea" id="RHEA:41833"/>
    </physiologicalReaction>
</comment>
<comment type="catalytic activity">
    <reaction evidence="17 19 20">
        <text>hexanoyl-[ACP] + malonyl-[ACP] + H(+) = 3-oxooctanoyl-[ACP] + holo-[ACP] + CO2</text>
        <dbReference type="Rhea" id="RHEA:41836"/>
        <dbReference type="Rhea" id="RHEA-COMP:9623"/>
        <dbReference type="Rhea" id="RHEA-COMP:9632"/>
        <dbReference type="Rhea" id="RHEA-COMP:9633"/>
        <dbReference type="Rhea" id="RHEA-COMP:9685"/>
        <dbReference type="ChEBI" id="CHEBI:15378"/>
        <dbReference type="ChEBI" id="CHEBI:16526"/>
        <dbReference type="ChEBI" id="CHEBI:64479"/>
        <dbReference type="ChEBI" id="CHEBI:78449"/>
        <dbReference type="ChEBI" id="CHEBI:78459"/>
        <dbReference type="ChEBI" id="CHEBI:78460"/>
    </reaction>
    <physiologicalReaction direction="left-to-right" evidence="17 19 20">
        <dbReference type="Rhea" id="RHEA:41837"/>
    </physiologicalReaction>
</comment>
<comment type="catalytic activity">
    <reaction evidence="17 19 20">
        <text>3-oxooctanoyl-[ACP] + NADPH + H(+) = (3R)-hydroxyoctanoyl-[ACP] + NADP(+)</text>
        <dbReference type="Rhea" id="RHEA:41840"/>
        <dbReference type="Rhea" id="RHEA-COMP:9633"/>
        <dbReference type="Rhea" id="RHEA-COMP:9634"/>
        <dbReference type="ChEBI" id="CHEBI:15378"/>
        <dbReference type="ChEBI" id="CHEBI:57783"/>
        <dbReference type="ChEBI" id="CHEBI:58349"/>
        <dbReference type="ChEBI" id="CHEBI:78460"/>
        <dbReference type="ChEBI" id="CHEBI:78461"/>
    </reaction>
    <physiologicalReaction direction="left-to-right" evidence="17 19 20">
        <dbReference type="Rhea" id="RHEA:41841"/>
    </physiologicalReaction>
</comment>
<comment type="catalytic activity">
    <reaction evidence="17 19 20">
        <text>(3R)-hydroxyoctanoyl-[ACP] = (2E)-octenoyl-[ACP] + H2O</text>
        <dbReference type="Rhea" id="RHEA:41844"/>
        <dbReference type="Rhea" id="RHEA-COMP:9634"/>
        <dbReference type="Rhea" id="RHEA-COMP:9635"/>
        <dbReference type="ChEBI" id="CHEBI:15377"/>
        <dbReference type="ChEBI" id="CHEBI:78461"/>
        <dbReference type="ChEBI" id="CHEBI:78462"/>
    </reaction>
    <physiologicalReaction direction="left-to-right" evidence="17 19 20">
        <dbReference type="Rhea" id="RHEA:41845"/>
    </physiologicalReaction>
</comment>
<comment type="catalytic activity">
    <reaction evidence="17 19 20">
        <text>(2E)-octenoyl-[ACP] + NADPH + H(+) = octanoyl-[ACP] + NADP(+)</text>
        <dbReference type="Rhea" id="RHEA:41848"/>
        <dbReference type="Rhea" id="RHEA-COMP:9635"/>
        <dbReference type="Rhea" id="RHEA-COMP:9636"/>
        <dbReference type="ChEBI" id="CHEBI:15378"/>
        <dbReference type="ChEBI" id="CHEBI:57783"/>
        <dbReference type="ChEBI" id="CHEBI:58349"/>
        <dbReference type="ChEBI" id="CHEBI:78462"/>
        <dbReference type="ChEBI" id="CHEBI:78463"/>
    </reaction>
    <physiologicalReaction direction="left-to-right" evidence="17 19 20">
        <dbReference type="Rhea" id="RHEA:41849"/>
    </physiologicalReaction>
</comment>
<comment type="catalytic activity">
    <reaction evidence="17 19 20">
        <text>octanoyl-[ACP] + malonyl-[ACP] + H(+) = 3-oxodecanoyl-[ACP] + holo-[ACP] + CO2</text>
        <dbReference type="Rhea" id="RHEA:41852"/>
        <dbReference type="Rhea" id="RHEA-COMP:9623"/>
        <dbReference type="Rhea" id="RHEA-COMP:9636"/>
        <dbReference type="Rhea" id="RHEA-COMP:9637"/>
        <dbReference type="Rhea" id="RHEA-COMP:9685"/>
        <dbReference type="ChEBI" id="CHEBI:15378"/>
        <dbReference type="ChEBI" id="CHEBI:16526"/>
        <dbReference type="ChEBI" id="CHEBI:64479"/>
        <dbReference type="ChEBI" id="CHEBI:78449"/>
        <dbReference type="ChEBI" id="CHEBI:78463"/>
        <dbReference type="ChEBI" id="CHEBI:78464"/>
    </reaction>
    <physiologicalReaction direction="left-to-right" evidence="17 19 20">
        <dbReference type="Rhea" id="RHEA:41853"/>
    </physiologicalReaction>
</comment>
<comment type="catalytic activity">
    <reaction evidence="17 19 20">
        <text>3-oxodecanoyl-[ACP] + NADPH + H(+) = (3R)-hydroxydecanoyl-[ACP] + NADP(+)</text>
        <dbReference type="Rhea" id="RHEA:41856"/>
        <dbReference type="Rhea" id="RHEA-COMP:9637"/>
        <dbReference type="Rhea" id="RHEA-COMP:9638"/>
        <dbReference type="ChEBI" id="CHEBI:15378"/>
        <dbReference type="ChEBI" id="CHEBI:57783"/>
        <dbReference type="ChEBI" id="CHEBI:58349"/>
        <dbReference type="ChEBI" id="CHEBI:78464"/>
        <dbReference type="ChEBI" id="CHEBI:78466"/>
    </reaction>
    <physiologicalReaction direction="left-to-right" evidence="17 19 20">
        <dbReference type="Rhea" id="RHEA:41857"/>
    </physiologicalReaction>
</comment>
<comment type="catalytic activity">
    <reaction evidence="17 19 20">
        <text>(3R)-hydroxydecanoyl-[ACP] = (2E)-decenoyl-[ACP] + H2O</text>
        <dbReference type="Rhea" id="RHEA:41860"/>
        <dbReference type="Rhea" id="RHEA-COMP:9638"/>
        <dbReference type="Rhea" id="RHEA-COMP:9639"/>
        <dbReference type="ChEBI" id="CHEBI:15377"/>
        <dbReference type="ChEBI" id="CHEBI:78466"/>
        <dbReference type="ChEBI" id="CHEBI:78467"/>
    </reaction>
    <physiologicalReaction direction="left-to-right" evidence="17 19 20">
        <dbReference type="Rhea" id="RHEA:41861"/>
    </physiologicalReaction>
</comment>
<comment type="catalytic activity">
    <reaction evidence="17 19 20">
        <text>(2E)-decenoyl-[ACP] + NADPH + H(+) = decanoyl-[ACP] + NADP(+)</text>
        <dbReference type="Rhea" id="RHEA:41864"/>
        <dbReference type="Rhea" id="RHEA-COMP:9639"/>
        <dbReference type="Rhea" id="RHEA-COMP:9640"/>
        <dbReference type="ChEBI" id="CHEBI:15378"/>
        <dbReference type="ChEBI" id="CHEBI:57783"/>
        <dbReference type="ChEBI" id="CHEBI:58349"/>
        <dbReference type="ChEBI" id="CHEBI:78467"/>
        <dbReference type="ChEBI" id="CHEBI:78468"/>
    </reaction>
    <physiologicalReaction direction="left-to-right" evidence="17 19 20">
        <dbReference type="Rhea" id="RHEA:41865"/>
    </physiologicalReaction>
</comment>
<comment type="catalytic activity">
    <reaction evidence="17 19 20">
        <text>decanoyl-[ACP] + malonyl-[ACP] + H(+) = 3-oxododecanoyl-[ACP] + holo-[ACP] + CO2</text>
        <dbReference type="Rhea" id="RHEA:41868"/>
        <dbReference type="Rhea" id="RHEA-COMP:9623"/>
        <dbReference type="Rhea" id="RHEA-COMP:9640"/>
        <dbReference type="Rhea" id="RHEA-COMP:9641"/>
        <dbReference type="Rhea" id="RHEA-COMP:9685"/>
        <dbReference type="ChEBI" id="CHEBI:15378"/>
        <dbReference type="ChEBI" id="CHEBI:16526"/>
        <dbReference type="ChEBI" id="CHEBI:64479"/>
        <dbReference type="ChEBI" id="CHEBI:78449"/>
        <dbReference type="ChEBI" id="CHEBI:78468"/>
        <dbReference type="ChEBI" id="CHEBI:78469"/>
    </reaction>
    <physiologicalReaction direction="left-to-right" evidence="17 19 20">
        <dbReference type="Rhea" id="RHEA:41869"/>
    </physiologicalReaction>
</comment>
<comment type="catalytic activity">
    <reaction evidence="17 19 20">
        <text>3-oxododecanoyl-[ACP] + NADPH + H(+) = (3R)-hydroxydodecanoyl-[ACP] + NADP(+)</text>
        <dbReference type="Rhea" id="RHEA:41872"/>
        <dbReference type="Rhea" id="RHEA-COMP:9641"/>
        <dbReference type="Rhea" id="RHEA-COMP:9642"/>
        <dbReference type="ChEBI" id="CHEBI:15378"/>
        <dbReference type="ChEBI" id="CHEBI:57783"/>
        <dbReference type="ChEBI" id="CHEBI:58349"/>
        <dbReference type="ChEBI" id="CHEBI:78469"/>
        <dbReference type="ChEBI" id="CHEBI:78470"/>
    </reaction>
    <physiologicalReaction direction="left-to-right" evidence="17 19 20">
        <dbReference type="Rhea" id="RHEA:41873"/>
    </physiologicalReaction>
</comment>
<comment type="catalytic activity">
    <reaction evidence="17 19 20">
        <text>(3R)-hydroxydodecanoyl-[ACP] = (2E)-dodecenoyl-[ACP] + H2O</text>
        <dbReference type="Rhea" id="RHEA:41876"/>
        <dbReference type="Rhea" id="RHEA-COMP:9642"/>
        <dbReference type="Rhea" id="RHEA-COMP:9643"/>
        <dbReference type="ChEBI" id="CHEBI:15377"/>
        <dbReference type="ChEBI" id="CHEBI:78470"/>
        <dbReference type="ChEBI" id="CHEBI:78472"/>
    </reaction>
    <physiologicalReaction direction="left-to-right" evidence="17 19 20">
        <dbReference type="Rhea" id="RHEA:41877"/>
    </physiologicalReaction>
</comment>
<comment type="catalytic activity">
    <reaction evidence="17 19 20">
        <text>(2E)-dodecenoyl-[ACP] + NADPH + H(+) = dodecanoyl-[ACP] + NADP(+)</text>
        <dbReference type="Rhea" id="RHEA:41880"/>
        <dbReference type="Rhea" id="RHEA-COMP:9643"/>
        <dbReference type="Rhea" id="RHEA-COMP:9644"/>
        <dbReference type="ChEBI" id="CHEBI:15378"/>
        <dbReference type="ChEBI" id="CHEBI:57783"/>
        <dbReference type="ChEBI" id="CHEBI:58349"/>
        <dbReference type="ChEBI" id="CHEBI:65264"/>
        <dbReference type="ChEBI" id="CHEBI:78472"/>
    </reaction>
    <physiologicalReaction direction="left-to-right" evidence="17 19 20">
        <dbReference type="Rhea" id="RHEA:41881"/>
    </physiologicalReaction>
</comment>
<comment type="catalytic activity">
    <reaction evidence="17 19 20">
        <text>dodecanoyl-[ACP] + malonyl-[ACP] + H(+) = 3-oxotetradecanoyl-[ACP] + holo-[ACP] + CO2</text>
        <dbReference type="Rhea" id="RHEA:41884"/>
        <dbReference type="Rhea" id="RHEA-COMP:9623"/>
        <dbReference type="Rhea" id="RHEA-COMP:9644"/>
        <dbReference type="Rhea" id="RHEA-COMP:9645"/>
        <dbReference type="Rhea" id="RHEA-COMP:9685"/>
        <dbReference type="ChEBI" id="CHEBI:15378"/>
        <dbReference type="ChEBI" id="CHEBI:16526"/>
        <dbReference type="ChEBI" id="CHEBI:64479"/>
        <dbReference type="ChEBI" id="CHEBI:65264"/>
        <dbReference type="ChEBI" id="CHEBI:78449"/>
        <dbReference type="ChEBI" id="CHEBI:78473"/>
    </reaction>
    <physiologicalReaction direction="left-to-right" evidence="17 19 20">
        <dbReference type="Rhea" id="RHEA:41885"/>
    </physiologicalReaction>
</comment>
<comment type="catalytic activity">
    <reaction evidence="17 19 20">
        <text>3-oxotetradecanoyl-[ACP] + NADPH + H(+) = (3R)-hydroxytetradecanoyl-[ACP] + NADP(+)</text>
        <dbReference type="Rhea" id="RHEA:41888"/>
        <dbReference type="Rhea" id="RHEA-COMP:9645"/>
        <dbReference type="Rhea" id="RHEA-COMP:9646"/>
        <dbReference type="ChEBI" id="CHEBI:15378"/>
        <dbReference type="ChEBI" id="CHEBI:57783"/>
        <dbReference type="ChEBI" id="CHEBI:58349"/>
        <dbReference type="ChEBI" id="CHEBI:78473"/>
        <dbReference type="ChEBI" id="CHEBI:78474"/>
    </reaction>
    <physiologicalReaction direction="left-to-right" evidence="17 19 20">
        <dbReference type="Rhea" id="RHEA:41889"/>
    </physiologicalReaction>
</comment>
<comment type="catalytic activity">
    <reaction evidence="17 19 20">
        <text>(3R)-hydroxytetradecanoyl-[ACP] = (2E)-tetradecenoyl-[ACP] + H2O</text>
        <dbReference type="Rhea" id="RHEA:41892"/>
        <dbReference type="Rhea" id="RHEA-COMP:9646"/>
        <dbReference type="Rhea" id="RHEA-COMP:9647"/>
        <dbReference type="ChEBI" id="CHEBI:15377"/>
        <dbReference type="ChEBI" id="CHEBI:78474"/>
        <dbReference type="ChEBI" id="CHEBI:78475"/>
    </reaction>
    <physiologicalReaction direction="left-to-right" evidence="17 19 20">
        <dbReference type="Rhea" id="RHEA:41893"/>
    </physiologicalReaction>
</comment>
<comment type="catalytic activity">
    <reaction evidence="17 19 20">
        <text>(2E)-tetradecenoyl-[ACP] + NADPH + H(+) = tetradecanoyl-[ACP] + NADP(+)</text>
        <dbReference type="Rhea" id="RHEA:41896"/>
        <dbReference type="Rhea" id="RHEA-COMP:9647"/>
        <dbReference type="Rhea" id="RHEA-COMP:9648"/>
        <dbReference type="ChEBI" id="CHEBI:15378"/>
        <dbReference type="ChEBI" id="CHEBI:57783"/>
        <dbReference type="ChEBI" id="CHEBI:58349"/>
        <dbReference type="ChEBI" id="CHEBI:78475"/>
        <dbReference type="ChEBI" id="CHEBI:78477"/>
    </reaction>
    <physiologicalReaction direction="left-to-right" evidence="17 19 20">
        <dbReference type="Rhea" id="RHEA:41897"/>
    </physiologicalReaction>
</comment>
<comment type="catalytic activity">
    <reaction evidence="17 19 20">
        <text>tetradecanoyl-[ACP] + malonyl-[ACP] + H(+) = 3-oxohexadecanoyl-[ACP] + holo-[ACP] + CO2</text>
        <dbReference type="Rhea" id="RHEA:41900"/>
        <dbReference type="Rhea" id="RHEA-COMP:9623"/>
        <dbReference type="Rhea" id="RHEA-COMP:9648"/>
        <dbReference type="Rhea" id="RHEA-COMP:9649"/>
        <dbReference type="Rhea" id="RHEA-COMP:9685"/>
        <dbReference type="ChEBI" id="CHEBI:15378"/>
        <dbReference type="ChEBI" id="CHEBI:16526"/>
        <dbReference type="ChEBI" id="CHEBI:64479"/>
        <dbReference type="ChEBI" id="CHEBI:78449"/>
        <dbReference type="ChEBI" id="CHEBI:78477"/>
        <dbReference type="ChEBI" id="CHEBI:78478"/>
    </reaction>
    <physiologicalReaction direction="left-to-right" evidence="17 19 20">
        <dbReference type="Rhea" id="RHEA:41901"/>
    </physiologicalReaction>
</comment>
<comment type="catalytic activity">
    <reaction evidence="17 19 20">
        <text>3-oxohexadecanoyl-[ACP] + NADPH + H(+) = (3R)-hydroxyhexadecanoyl-[ACP] + NADP(+)</text>
        <dbReference type="Rhea" id="RHEA:41904"/>
        <dbReference type="Rhea" id="RHEA-COMP:9649"/>
        <dbReference type="Rhea" id="RHEA-COMP:9650"/>
        <dbReference type="ChEBI" id="CHEBI:15378"/>
        <dbReference type="ChEBI" id="CHEBI:57783"/>
        <dbReference type="ChEBI" id="CHEBI:58349"/>
        <dbReference type="ChEBI" id="CHEBI:78478"/>
        <dbReference type="ChEBI" id="CHEBI:78480"/>
    </reaction>
    <physiologicalReaction direction="left-to-right" evidence="17 19 20">
        <dbReference type="Rhea" id="RHEA:41905"/>
    </physiologicalReaction>
</comment>
<comment type="catalytic activity">
    <reaction evidence="17 19 20">
        <text>(3R)-hydroxyhexadecanoyl-[ACP] = (2E)-hexadecenoyl-[ACP] + H2O</text>
        <dbReference type="Rhea" id="RHEA:41908"/>
        <dbReference type="Rhea" id="RHEA-COMP:9650"/>
        <dbReference type="Rhea" id="RHEA-COMP:9651"/>
        <dbReference type="ChEBI" id="CHEBI:15377"/>
        <dbReference type="ChEBI" id="CHEBI:78480"/>
        <dbReference type="ChEBI" id="CHEBI:78481"/>
    </reaction>
    <physiologicalReaction direction="left-to-right" evidence="17 19 20">
        <dbReference type="Rhea" id="RHEA:41909"/>
    </physiologicalReaction>
</comment>
<comment type="catalytic activity">
    <reaction evidence="17 19 20">
        <text>(2E)-hexadecenoyl-[ACP] + NADPH + H(+) = hexadecanoyl-[ACP] + NADP(+)</text>
        <dbReference type="Rhea" id="RHEA:41912"/>
        <dbReference type="Rhea" id="RHEA-COMP:9651"/>
        <dbReference type="Rhea" id="RHEA-COMP:9652"/>
        <dbReference type="ChEBI" id="CHEBI:15378"/>
        <dbReference type="ChEBI" id="CHEBI:57783"/>
        <dbReference type="ChEBI" id="CHEBI:58349"/>
        <dbReference type="ChEBI" id="CHEBI:78481"/>
        <dbReference type="ChEBI" id="CHEBI:78483"/>
    </reaction>
    <physiologicalReaction direction="left-to-right" evidence="17 19 20">
        <dbReference type="Rhea" id="RHEA:41913"/>
    </physiologicalReaction>
</comment>
<comment type="catalytic activity">
    <reaction evidence="17 19">
        <text>hexadecanoyl-[ACP] + malonyl-[ACP] + H(+) = 3-oxooctadecanoyl-[ACP] + holo-[ACP] + CO2</text>
        <dbReference type="Rhea" id="RHEA:41916"/>
        <dbReference type="Rhea" id="RHEA-COMP:9623"/>
        <dbReference type="Rhea" id="RHEA-COMP:9652"/>
        <dbReference type="Rhea" id="RHEA-COMP:9653"/>
        <dbReference type="Rhea" id="RHEA-COMP:9685"/>
        <dbReference type="ChEBI" id="CHEBI:15378"/>
        <dbReference type="ChEBI" id="CHEBI:16526"/>
        <dbReference type="ChEBI" id="CHEBI:64479"/>
        <dbReference type="ChEBI" id="CHEBI:78449"/>
        <dbReference type="ChEBI" id="CHEBI:78483"/>
        <dbReference type="ChEBI" id="CHEBI:78487"/>
    </reaction>
    <physiologicalReaction direction="left-to-right" evidence="17 19">
        <dbReference type="Rhea" id="RHEA:41917"/>
    </physiologicalReaction>
</comment>
<comment type="catalytic activity">
    <reaction evidence="17 19">
        <text>3-oxooctadecanoyl-[ACP] + NADPH + H(+) = (3R)-hydroxyoctadecanoyl-[ACP] + NADP(+)</text>
        <dbReference type="Rhea" id="RHEA:41920"/>
        <dbReference type="Rhea" id="RHEA-COMP:9653"/>
        <dbReference type="Rhea" id="RHEA-COMP:9654"/>
        <dbReference type="ChEBI" id="CHEBI:15378"/>
        <dbReference type="ChEBI" id="CHEBI:57783"/>
        <dbReference type="ChEBI" id="CHEBI:58349"/>
        <dbReference type="ChEBI" id="CHEBI:78487"/>
        <dbReference type="ChEBI" id="CHEBI:78488"/>
    </reaction>
    <physiologicalReaction direction="left-to-right" evidence="17 19">
        <dbReference type="Rhea" id="RHEA:41921"/>
    </physiologicalReaction>
</comment>
<comment type="catalytic activity">
    <reaction evidence="17 19">
        <text>(3R)-hydroxyoctadecanoyl-[ACP] = (2E)-octadecenoyl-[ACP] + H2O</text>
        <dbReference type="Rhea" id="RHEA:41924"/>
        <dbReference type="Rhea" id="RHEA-COMP:9654"/>
        <dbReference type="Rhea" id="RHEA-COMP:9655"/>
        <dbReference type="ChEBI" id="CHEBI:15377"/>
        <dbReference type="ChEBI" id="CHEBI:78488"/>
        <dbReference type="ChEBI" id="CHEBI:78489"/>
    </reaction>
    <physiologicalReaction direction="left-to-right" evidence="17 19">
        <dbReference type="Rhea" id="RHEA:41925"/>
    </physiologicalReaction>
</comment>
<comment type="catalytic activity">
    <reaction evidence="17 19">
        <text>(2E)-octadecenoyl-[ACP] + NADPH + H(+) = octadecanoyl-[ACP] + NADP(+)</text>
        <dbReference type="Rhea" id="RHEA:41928"/>
        <dbReference type="Rhea" id="RHEA-COMP:9655"/>
        <dbReference type="Rhea" id="RHEA-COMP:9656"/>
        <dbReference type="ChEBI" id="CHEBI:15378"/>
        <dbReference type="ChEBI" id="CHEBI:57783"/>
        <dbReference type="ChEBI" id="CHEBI:58349"/>
        <dbReference type="ChEBI" id="CHEBI:78489"/>
        <dbReference type="ChEBI" id="CHEBI:78495"/>
    </reaction>
    <physiologicalReaction direction="left-to-right" evidence="17 19">
        <dbReference type="Rhea" id="RHEA:41929"/>
    </physiologicalReaction>
</comment>
<comment type="catalytic activity">
    <reaction evidence="19 20">
        <text>tetradecanoyl-[ACP] + H2O = tetradecanoate + holo-[ACP] + H(+)</text>
        <dbReference type="Rhea" id="RHEA:30123"/>
        <dbReference type="Rhea" id="RHEA-COMP:9648"/>
        <dbReference type="Rhea" id="RHEA-COMP:9685"/>
        <dbReference type="ChEBI" id="CHEBI:15377"/>
        <dbReference type="ChEBI" id="CHEBI:15378"/>
        <dbReference type="ChEBI" id="CHEBI:30807"/>
        <dbReference type="ChEBI" id="CHEBI:64479"/>
        <dbReference type="ChEBI" id="CHEBI:78477"/>
        <dbReference type="EC" id="3.1.2.14"/>
    </reaction>
    <physiologicalReaction direction="left-to-right" evidence="17 19">
        <dbReference type="Rhea" id="RHEA:30124"/>
    </physiologicalReaction>
</comment>
<comment type="catalytic activity">
    <reaction evidence="8 17 19">
        <text>octadecanoyl-[ACP] + H2O = octadecanoate + holo-[ACP] + H(+)</text>
        <dbReference type="Rhea" id="RHEA:63204"/>
        <dbReference type="Rhea" id="RHEA-COMP:9656"/>
        <dbReference type="Rhea" id="RHEA-COMP:9685"/>
        <dbReference type="ChEBI" id="CHEBI:15377"/>
        <dbReference type="ChEBI" id="CHEBI:15378"/>
        <dbReference type="ChEBI" id="CHEBI:25629"/>
        <dbReference type="ChEBI" id="CHEBI:64479"/>
        <dbReference type="ChEBI" id="CHEBI:78495"/>
    </reaction>
    <physiologicalReaction direction="left-to-right" evidence="8 17 19">
        <dbReference type="Rhea" id="RHEA:63205"/>
    </physiologicalReaction>
</comment>
<comment type="activity regulation">
    <text evidence="10 14">Activated by S-nitrosylation which promotes enzyme dimerization (PubMed:26851298). Cerulenin, a potent non-competitive pharmacological inhibitor of FAS, binds covalently to the active site of the condensing enzyme region, inactivating a key enzyme step in fatty acid synthesis (PubMed:16969344).</text>
</comment>
<comment type="biophysicochemical properties">
    <kinetics>
        <KM evidence="17">8 uM for acetyl-CoA</KM>
        <KM evidence="17">20 uM for malonyl-CoA</KM>
        <KM evidence="17">25 uM for NADPH</KM>
        <KM evidence="17">4 uM for butanoyl-CoA</KM>
        <KM evidence="9">7 uM for acetyl-CoA</KM>
        <KM evidence="9">6 uM for malonyl-CoA</KM>
        <KM evidence="9">5 uM for NADPH</KM>
        <Vmax evidence="17">29.6 nmol/min/mg enzyme for the incorporation of acetyl-CoA into fatty acids</Vmax>
        <Vmax evidence="17">220.6 nmol/min/mg enzyme for the incorporation of malonyl-CoA into fatty acids</Vmax>
        <Vmax evidence="17">462.0 nmol/min/mg enzyme for the oxidation of NADPH</Vmax>
        <Vmax evidence="9">440.0 nmol/min/mg enzyme for the oxidation of NADPH (at pH 7.0)</Vmax>
    </kinetics>
    <phDependence>
        <text evidence="17">Optimum pH is 6.5 to 6.7.</text>
    </phDependence>
</comment>
<comment type="pathway">
    <text evidence="17 19 20">Lipid metabolism; fatty acid biosynthesis.</text>
</comment>
<comment type="subunit">
    <text evidence="12 13 21">Homodimer which is arranged in a head to tail fashion (PubMed:17618296, PubMed:18022563, Ref.34). Interacts with CEACAM1; this interaction is insulin and phosphorylation-dependent; reduces fatty-acid synthase activity.</text>
</comment>
<comment type="interaction">
    <interactant intactId="EBI-356658">
        <id>P49327</id>
    </interactant>
    <interactant intactId="EBI-10827839">
        <id>Q15848</id>
        <label>ADIPOQ</label>
    </interactant>
    <organismsDiffer>false</organismsDiffer>
    <experiments>3</experiments>
</comment>
<comment type="interaction">
    <interactant intactId="EBI-356658">
        <id>P49327</id>
    </interactant>
    <interactant intactId="EBI-447269">
        <id>Q16665</id>
        <label>HIF1A</label>
    </interactant>
    <organismsDiffer>false</organismsDiffer>
    <experiments>4</experiments>
</comment>
<comment type="interaction">
    <interactant intactId="EBI-356658">
        <id>P49327</id>
    </interactant>
    <interactant intactId="EBI-466029">
        <id>P42858</id>
        <label>HTT</label>
    </interactant>
    <organismsDiffer>false</organismsDiffer>
    <experiments>13</experiments>
</comment>
<comment type="interaction">
    <interactant intactId="EBI-356658">
        <id>P49327</id>
    </interactant>
    <interactant intactId="EBI-12508070">
        <id>Q8IV20</id>
        <label>LACC1</label>
    </interactant>
    <organismsDiffer>false</organismsDiffer>
    <experiments>8</experiments>
</comment>
<comment type="interaction">
    <interactant intactId="EBI-356658">
        <id>P49327</id>
    </interactant>
    <interactant intactId="EBI-739832">
        <id>Q8TBB1</id>
        <label>LNX1</label>
    </interactant>
    <organismsDiffer>false</organismsDiffer>
    <experiments>3</experiments>
</comment>
<comment type="interaction">
    <interactant intactId="EBI-356658">
        <id>P49327</id>
    </interactant>
    <interactant intactId="EBI-6927928">
        <id>PRO_0000045603</id>
        <dbReference type="UniProtKB" id="Q99IB8"/>
    </interactant>
    <organismsDiffer>true</organismsDiffer>
    <experiments>6</experiments>
</comment>
<comment type="subcellular location">
    <subcellularLocation>
        <location evidence="11">Cytoplasm</location>
    </subcellularLocation>
    <subcellularLocation>
        <location evidence="11">Melanosome</location>
    </subcellularLocation>
    <text>Identified by mass spectrometry in melanosome fractions from stage I to stage IV.</text>
</comment>
<comment type="tissue specificity">
    <text evidence="17 18">Ubiquitous. Prominent expression in brain, lung, liver and mammary gland.</text>
</comment>
<comment type="PTM">
    <text evidence="14">S-nitrosylation of Fatty acid synthase at cysteine residues Cys-1471 or Cys-2091 is important for the enzyme dimerization. In adipocytes, S-nitrosylation of Fatty acid synthase occurs under physiological conditions and gradually increases during adipogenesis.</text>
</comment>
<comment type="miscellaneous">
    <text>The relatively low beta-ketoacyl synthase activity may be attributable to the low 4'-phosphopantetheine content of the protein.</text>
</comment>
<comment type="sequence caution" evidence="23">
    <conflict type="erroneous initiation">
        <sequence resource="EMBL-CDS" id="AAB35516"/>
    </conflict>
    <text>Extended N-terminus.</text>
</comment>
<comment type="sequence caution" evidence="23">
    <conflict type="miscellaneous discrepancy">
        <sequence resource="EMBL-CDS" id="AAC50259"/>
    </conflict>
    <text>Several sequencing errors.</text>
</comment>
<comment type="sequence caution" evidence="23">
    <conflict type="erroneous initiation">
        <sequence resource="EMBL-CDS" id="BAE06070"/>
    </conflict>
    <text>Extended N-terminus.</text>
</comment>
<dbReference type="EC" id="2.3.1.85" evidence="9 14 17 19 20"/>
<dbReference type="EC" id="2.3.1.38" evidence="17 19 20"/>
<dbReference type="EC" id="2.3.1.39" evidence="17 19 20"/>
<dbReference type="EC" id="2.3.1.41" evidence="17 19 20"/>
<dbReference type="EC" id="1.1.1.100" evidence="17 19 20"/>
<dbReference type="EC" id="4.2.1.59" evidence="17 19 20"/>
<dbReference type="EC" id="1.3.1.39" evidence="17 19 20"/>
<dbReference type="EC" id="3.1.2.14" evidence="8 17 19 20"/>
<dbReference type="EMBL" id="U26644">
    <property type="protein sequence ID" value="AAC50259.1"/>
    <property type="status" value="ALT_SEQ"/>
    <property type="molecule type" value="mRNA"/>
</dbReference>
<dbReference type="EMBL" id="U29344">
    <property type="protein sequence ID" value="AAA73576.1"/>
    <property type="molecule type" value="mRNA"/>
</dbReference>
<dbReference type="EMBL" id="AY451392">
    <property type="protein sequence ID" value="AAS09886.1"/>
    <property type="molecule type" value="mRNA"/>
</dbReference>
<dbReference type="EMBL" id="AB209988">
    <property type="protein sequence ID" value="BAE06070.1"/>
    <property type="status" value="ALT_INIT"/>
    <property type="molecule type" value="mRNA"/>
</dbReference>
<dbReference type="EMBL" id="AC135056">
    <property type="status" value="NOT_ANNOTATED_CDS"/>
    <property type="molecule type" value="Genomic_DNA"/>
</dbReference>
<dbReference type="EMBL" id="BC007267">
    <property type="protein sequence ID" value="AAH07267.1"/>
    <property type="molecule type" value="mRNA"/>
</dbReference>
<dbReference type="EMBL" id="BC007909">
    <property type="protein sequence ID" value="AAH07909.1"/>
    <property type="molecule type" value="mRNA"/>
</dbReference>
<dbReference type="EMBL" id="BC014634">
    <property type="protein sequence ID" value="AAH14634.2"/>
    <property type="molecule type" value="mRNA"/>
</dbReference>
<dbReference type="EMBL" id="BC063242">
    <property type="protein sequence ID" value="AAH63242.1"/>
    <property type="molecule type" value="mRNA"/>
</dbReference>
<dbReference type="EMBL" id="S80437">
    <property type="protein sequence ID" value="AAB35516.1"/>
    <property type="status" value="ALT_INIT"/>
    <property type="molecule type" value="mRNA"/>
</dbReference>
<dbReference type="CCDS" id="CCDS11801.1"/>
<dbReference type="PIR" id="A57788">
    <property type="entry name" value="A57788"/>
</dbReference>
<dbReference type="PIR" id="G01880">
    <property type="entry name" value="G01880"/>
</dbReference>
<dbReference type="RefSeq" id="NP_004095.4">
    <property type="nucleotide sequence ID" value="NM_004104.4"/>
</dbReference>
<dbReference type="RefSeq" id="XP_011521840.1">
    <property type="nucleotide sequence ID" value="XM_011523538.3"/>
</dbReference>
<dbReference type="RefSeq" id="XP_054171452.1">
    <property type="nucleotide sequence ID" value="XM_054315477.1"/>
</dbReference>
<dbReference type="PDB" id="1XKT">
    <property type="method" value="X-ray"/>
    <property type="resolution" value="2.60 A"/>
    <property type="chains" value="A/B=2218-2502"/>
</dbReference>
<dbReference type="PDB" id="2CG5">
    <property type="method" value="X-ray"/>
    <property type="resolution" value="2.70 A"/>
    <property type="chains" value="B=2119-2207"/>
</dbReference>
<dbReference type="PDB" id="2JFD">
    <property type="method" value="X-ray"/>
    <property type="resolution" value="2.81 A"/>
    <property type="chains" value="A/B/C/D=422-823"/>
</dbReference>
<dbReference type="PDB" id="2JFK">
    <property type="method" value="X-ray"/>
    <property type="resolution" value="2.40 A"/>
    <property type="chains" value="A/B/C/D=422-831"/>
</dbReference>
<dbReference type="PDB" id="2PX6">
    <property type="method" value="X-ray"/>
    <property type="resolution" value="2.30 A"/>
    <property type="chains" value="A/B=2200-2511"/>
</dbReference>
<dbReference type="PDB" id="3HHD">
    <property type="method" value="X-ray"/>
    <property type="resolution" value="2.15 A"/>
    <property type="chains" value="A/B/C/D=2-963"/>
</dbReference>
<dbReference type="PDB" id="3TJM">
    <property type="method" value="X-ray"/>
    <property type="resolution" value="1.48 A"/>
    <property type="chains" value="A=2218-2500"/>
</dbReference>
<dbReference type="PDB" id="4PIV">
    <property type="method" value="X-ray"/>
    <property type="resolution" value="2.30 A"/>
    <property type="chains" value="A/B=1110-2114"/>
</dbReference>
<dbReference type="PDB" id="4W82">
    <property type="method" value="X-ray"/>
    <property type="resolution" value="1.70 A"/>
    <property type="chains" value="A/B=1529-1867"/>
</dbReference>
<dbReference type="PDB" id="4W9N">
    <property type="method" value="X-ray"/>
    <property type="resolution" value="1.84 A"/>
    <property type="chains" value="A/B/C/D=1529-1867"/>
</dbReference>
<dbReference type="PDB" id="4Z49">
    <property type="method" value="X-ray"/>
    <property type="resolution" value="1.70 A"/>
    <property type="chains" value="A/B=2221-2502"/>
</dbReference>
<dbReference type="PDB" id="5C37">
    <property type="method" value="X-ray"/>
    <property type="resolution" value="2.30 A"/>
    <property type="chains" value="A/C=1108-1523, A/C=1877-2122"/>
</dbReference>
<dbReference type="PDB" id="6NNA">
    <property type="method" value="X-ray"/>
    <property type="resolution" value="2.26 A"/>
    <property type="chains" value="A/B=1109-2114"/>
</dbReference>
<dbReference type="PDB" id="7MHD">
    <property type="method" value="X-ray"/>
    <property type="resolution" value="2.03 A"/>
    <property type="chains" value="A=2215-2503"/>
</dbReference>
<dbReference type="PDB" id="7MHE">
    <property type="method" value="X-ray"/>
    <property type="resolution" value="2.80 A"/>
    <property type="chains" value="AAA=2215-2503"/>
</dbReference>
<dbReference type="PDB" id="8EYI">
    <property type="method" value="EM"/>
    <property type="resolution" value="2.70 A"/>
    <property type="chains" value="E/F=855-2511"/>
</dbReference>
<dbReference type="PDB" id="8EYK">
    <property type="method" value="EM"/>
    <property type="resolution" value="2.70 A"/>
    <property type="chains" value="E/F=855-2511"/>
</dbReference>
<dbReference type="PDB" id="8G7X">
    <property type="method" value="X-ray"/>
    <property type="resolution" value="1.81 A"/>
    <property type="chains" value="A/B=858-1103"/>
</dbReference>
<dbReference type="PDB" id="8GKC">
    <property type="method" value="EM"/>
    <property type="resolution" value="2.45 A"/>
    <property type="chains" value="A/D=855-2511"/>
</dbReference>
<dbReference type="PDB" id="8VF7">
    <property type="method" value="EM"/>
    <property type="resolution" value="3.20 A"/>
    <property type="chains" value="A/B=2-2511"/>
</dbReference>
<dbReference type="PDB" id="8VG4">
    <property type="method" value="EM"/>
    <property type="resolution" value="3.11 A"/>
    <property type="chains" value="A/B=2-2511"/>
</dbReference>
<dbReference type="PDB" id="8VLE">
    <property type="method" value="EM"/>
    <property type="resolution" value="3.30 A"/>
    <property type="chains" value="A/B=2-2511"/>
</dbReference>
<dbReference type="PDB" id="8VLO">
    <property type="method" value="EM"/>
    <property type="resolution" value="3.30 A"/>
    <property type="chains" value="A/B=2-2511"/>
</dbReference>
<dbReference type="PDB" id="8VLP">
    <property type="method" value="EM"/>
    <property type="resolution" value="3.20 A"/>
    <property type="chains" value="A/B=2-2511"/>
</dbReference>
<dbReference type="PDB" id="8VM0">
    <property type="method" value="EM"/>
    <property type="resolution" value="3.30 A"/>
    <property type="chains" value="A/B=2-2511"/>
</dbReference>
<dbReference type="PDB" id="8VM5">
    <property type="method" value="EM"/>
    <property type="resolution" value="3.30 A"/>
    <property type="chains" value="A/B=2-2511"/>
</dbReference>
<dbReference type="PDB" id="8VM6">
    <property type="method" value="EM"/>
    <property type="resolution" value="3.50 A"/>
    <property type="chains" value="A/B=2-2511"/>
</dbReference>
<dbReference type="PDB" id="8VM7">
    <property type="method" value="EM"/>
    <property type="resolution" value="3.30 A"/>
    <property type="chains" value="A/B=2-2511"/>
</dbReference>
<dbReference type="PDB" id="8VMC">
    <property type="method" value="EM"/>
    <property type="resolution" value="3.30 A"/>
    <property type="chains" value="A/B=2-2511"/>
</dbReference>
<dbReference type="PDB" id="8VMD">
    <property type="method" value="EM"/>
    <property type="resolution" value="3.46 A"/>
    <property type="chains" value="A/B=2-2511"/>
</dbReference>
<dbReference type="PDB" id="9B7Z">
    <property type="method" value="EM"/>
    <property type="resolution" value="2.50 A"/>
    <property type="chains" value="A/B=1-854"/>
</dbReference>
<dbReference type="PDB" id="9B80">
    <property type="method" value="EM"/>
    <property type="resolution" value="2.70 A"/>
    <property type="chains" value="A/B=857-2511"/>
</dbReference>
<dbReference type="PDB" id="9MJ9">
    <property type="method" value="EM"/>
    <property type="resolution" value="2.00 A"/>
    <property type="chains" value="A/B=1-854, C=2155-2170"/>
</dbReference>
<dbReference type="PDBsum" id="1XKT"/>
<dbReference type="PDBsum" id="2CG5"/>
<dbReference type="PDBsum" id="2JFD"/>
<dbReference type="PDBsum" id="2JFK"/>
<dbReference type="PDBsum" id="2PX6"/>
<dbReference type="PDBsum" id="3HHD"/>
<dbReference type="PDBsum" id="3TJM"/>
<dbReference type="PDBsum" id="4PIV"/>
<dbReference type="PDBsum" id="4W82"/>
<dbReference type="PDBsum" id="4W9N"/>
<dbReference type="PDBsum" id="4Z49"/>
<dbReference type="PDBsum" id="5C37"/>
<dbReference type="PDBsum" id="6NNA"/>
<dbReference type="PDBsum" id="7MHD"/>
<dbReference type="PDBsum" id="7MHE"/>
<dbReference type="PDBsum" id="8EYI"/>
<dbReference type="PDBsum" id="8EYK"/>
<dbReference type="PDBsum" id="8G7X"/>
<dbReference type="PDBsum" id="8GKC"/>
<dbReference type="PDBsum" id="8VF7"/>
<dbReference type="PDBsum" id="8VG4"/>
<dbReference type="PDBsum" id="8VLE"/>
<dbReference type="PDBsum" id="8VLO"/>
<dbReference type="PDBsum" id="8VLP"/>
<dbReference type="PDBsum" id="8VM0"/>
<dbReference type="PDBsum" id="8VM5"/>
<dbReference type="PDBsum" id="8VM6"/>
<dbReference type="PDBsum" id="8VM7"/>
<dbReference type="PDBsum" id="8VMC"/>
<dbReference type="PDBsum" id="8VMD"/>
<dbReference type="PDBsum" id="9B7Z"/>
<dbReference type="PDBsum" id="9B80"/>
<dbReference type="PDBsum" id="9MJ9"/>
<dbReference type="EMDB" id="EMD-28690"/>
<dbReference type="EMDB" id="EMD-28691"/>
<dbReference type="EMDB" id="EMD-40182"/>
<dbReference type="EMDB" id="EMD-43187"/>
<dbReference type="EMDB" id="EMD-43199"/>
<dbReference type="EMDB" id="EMD-43337"/>
<dbReference type="EMDB" id="EMD-43340"/>
<dbReference type="EMDB" id="EMD-43341"/>
<dbReference type="EMDB" id="EMD-43350"/>
<dbReference type="EMDB" id="EMD-43352"/>
<dbReference type="EMDB" id="EMD-43353"/>
<dbReference type="EMDB" id="EMD-43354"/>
<dbReference type="EMDB" id="EMD-43355"/>
<dbReference type="EMDB" id="EMD-43356"/>
<dbReference type="EMDB" id="EMD-44329"/>
<dbReference type="EMDB" id="EMD-44330"/>
<dbReference type="EMDB" id="EMD-44371"/>
<dbReference type="EMDB" id="EMD-44378"/>
<dbReference type="SMR" id="P49327"/>
<dbReference type="BioGRID" id="108488">
    <property type="interactions" value="1087"/>
</dbReference>
<dbReference type="DIP" id="DIP-33681N"/>
<dbReference type="FunCoup" id="P49327">
    <property type="interactions" value="1658"/>
</dbReference>
<dbReference type="IntAct" id="P49327">
    <property type="interactions" value="148"/>
</dbReference>
<dbReference type="MINT" id="P49327"/>
<dbReference type="STRING" id="9606.ENSP00000304592"/>
<dbReference type="BindingDB" id="P49327"/>
<dbReference type="ChEMBL" id="CHEMBL4158"/>
<dbReference type="DrugBank" id="DB15334">
    <property type="generic name" value="Biochanin A"/>
</dbReference>
<dbReference type="DrugBank" id="DB01034">
    <property type="generic name" value="Cerulenin"/>
</dbReference>
<dbReference type="DrugBank" id="DB12116">
    <property type="generic name" value="Epigallocatechin gallate"/>
</dbReference>
<dbReference type="DrugBank" id="DB07795">
    <property type="generic name" value="Fisetin"/>
</dbReference>
<dbReference type="DrugBank" id="DB16770">
    <property type="generic name" value="Morin"/>
</dbReference>
<dbReference type="DrugBank" id="DB01083">
    <property type="generic name" value="Orlistat"/>
</dbReference>
<dbReference type="DrugCentral" id="P49327"/>
<dbReference type="GuidetoPHARMACOLOGY" id="2608"/>
<dbReference type="SwissLipids" id="SLP:000000765"/>
<dbReference type="ESTHER" id="human-FASN">
    <property type="family name" value="Thioesterase"/>
</dbReference>
<dbReference type="CarbonylDB" id="P49327"/>
<dbReference type="GlyCosmos" id="P49327">
    <property type="glycosylation" value="2 sites, 1 glycan"/>
</dbReference>
<dbReference type="GlyGen" id="P49327">
    <property type="glycosylation" value="7 sites, 3 N-linked glycans (3 sites), 1 O-linked glycan (4 sites)"/>
</dbReference>
<dbReference type="iPTMnet" id="P49327"/>
<dbReference type="MetOSite" id="P49327"/>
<dbReference type="PhosphoSitePlus" id="P49327"/>
<dbReference type="SwissPalm" id="P49327"/>
<dbReference type="BioMuta" id="FASN"/>
<dbReference type="DMDM" id="269849686"/>
<dbReference type="CPTAC" id="CPTAC-369"/>
<dbReference type="CPTAC" id="CPTAC-370"/>
<dbReference type="CPTAC" id="CPTAC-371"/>
<dbReference type="CPTAC" id="CPTAC-372"/>
<dbReference type="jPOST" id="P49327"/>
<dbReference type="MassIVE" id="P49327"/>
<dbReference type="PaxDb" id="9606-ENSP00000304592"/>
<dbReference type="PeptideAtlas" id="P49327"/>
<dbReference type="PRIDE" id="P49327"/>
<dbReference type="ProteomicsDB" id="55989"/>
<dbReference type="Pumba" id="P49327"/>
<dbReference type="Antibodypedia" id="1650">
    <property type="antibodies" value="768 antibodies from 41 providers"/>
</dbReference>
<dbReference type="DNASU" id="2194"/>
<dbReference type="Ensembl" id="ENST00000306749.4">
    <property type="protein sequence ID" value="ENSP00000304592.2"/>
    <property type="gene ID" value="ENSG00000169710.9"/>
</dbReference>
<dbReference type="GeneID" id="2194"/>
<dbReference type="KEGG" id="hsa:2194"/>
<dbReference type="MANE-Select" id="ENST00000306749.4">
    <property type="protein sequence ID" value="ENSP00000304592.2"/>
    <property type="RefSeq nucleotide sequence ID" value="NM_004104.5"/>
    <property type="RefSeq protein sequence ID" value="NP_004095.4"/>
</dbReference>
<dbReference type="UCSC" id="uc002kdu.4">
    <property type="organism name" value="human"/>
</dbReference>
<dbReference type="AGR" id="HGNC:3594"/>
<dbReference type="CTD" id="2194"/>
<dbReference type="DisGeNET" id="2194"/>
<dbReference type="GeneCards" id="FASN"/>
<dbReference type="HGNC" id="HGNC:3594">
    <property type="gene designation" value="FASN"/>
</dbReference>
<dbReference type="HPA" id="ENSG00000169710">
    <property type="expression patterns" value="Tissue enhanced (adipose tissue, breast)"/>
</dbReference>
<dbReference type="MalaCards" id="FASN"/>
<dbReference type="MIM" id="600212">
    <property type="type" value="gene"/>
</dbReference>
<dbReference type="neXtProt" id="NX_P49327"/>
<dbReference type="OpenTargets" id="ENSG00000169710"/>
<dbReference type="PharmGKB" id="PA28006"/>
<dbReference type="VEuPathDB" id="HostDB:ENSG00000169710"/>
<dbReference type="eggNOG" id="KOG1202">
    <property type="taxonomic scope" value="Eukaryota"/>
</dbReference>
<dbReference type="GeneTree" id="ENSGT00940000157276"/>
<dbReference type="HOGENOM" id="CLU_000022_31_7_1"/>
<dbReference type="InParanoid" id="P49327"/>
<dbReference type="OMA" id="KMRGGEF"/>
<dbReference type="OrthoDB" id="329835at2759"/>
<dbReference type="PAN-GO" id="P49327">
    <property type="GO annotations" value="3 GO annotations based on evolutionary models"/>
</dbReference>
<dbReference type="PhylomeDB" id="P49327"/>
<dbReference type="TreeFam" id="TF300549"/>
<dbReference type="BioCyc" id="MetaCyc:HS09992-MONOMER"/>
<dbReference type="BRENDA" id="2.3.1.39">
    <property type="organism ID" value="2681"/>
</dbReference>
<dbReference type="BRENDA" id="2.3.1.85">
    <property type="organism ID" value="2681"/>
</dbReference>
<dbReference type="PathwayCommons" id="P49327"/>
<dbReference type="Reactome" id="R-HSA-163765">
    <property type="pathway name" value="ChREBP activates metabolic gene expression"/>
</dbReference>
<dbReference type="Reactome" id="R-HSA-199220">
    <property type="pathway name" value="Vitamin B5 (pantothenate) metabolism"/>
</dbReference>
<dbReference type="Reactome" id="R-HSA-2426168">
    <property type="pathway name" value="Activation of gene expression by SREBF (SREBP)"/>
</dbReference>
<dbReference type="Reactome" id="R-HSA-75105">
    <property type="pathway name" value="Fatty acyl-CoA biosynthesis"/>
</dbReference>
<dbReference type="Reactome" id="R-HSA-9029558">
    <property type="pathway name" value="NR1H2 &amp; NR1H3 regulate gene expression linked to lipogenesis"/>
</dbReference>
<dbReference type="SABIO-RK" id="P49327"/>
<dbReference type="SignaLink" id="P49327"/>
<dbReference type="SIGNOR" id="P49327"/>
<dbReference type="UniPathway" id="UPA00094"/>
<dbReference type="BioGRID-ORCS" id="2194">
    <property type="hits" value="173 hits in 1172 CRISPR screens"/>
</dbReference>
<dbReference type="CD-CODE" id="FB4E32DD">
    <property type="entry name" value="Presynaptic clusters and postsynaptic densities"/>
</dbReference>
<dbReference type="ChiTaRS" id="FASN">
    <property type="organism name" value="human"/>
</dbReference>
<dbReference type="EvolutionaryTrace" id="P49327"/>
<dbReference type="GeneWiki" id="Fatty_acid_synthase"/>
<dbReference type="GenomeRNAi" id="2194"/>
<dbReference type="Pharos" id="P49327">
    <property type="development level" value="Tchem"/>
</dbReference>
<dbReference type="PRO" id="PR:P49327"/>
<dbReference type="Proteomes" id="UP000005640">
    <property type="component" value="Chromosome 17"/>
</dbReference>
<dbReference type="RNAct" id="P49327">
    <property type="molecule type" value="protein"/>
</dbReference>
<dbReference type="Bgee" id="ENSG00000169710">
    <property type="expression patterns" value="Expressed in right hemisphere of cerebellum and 185 other cell types or tissues"/>
</dbReference>
<dbReference type="ExpressionAtlas" id="P49327">
    <property type="expression patterns" value="baseline and differential"/>
</dbReference>
<dbReference type="GO" id="GO:0005737">
    <property type="term" value="C:cytoplasm"/>
    <property type="evidence" value="ECO:0000318"/>
    <property type="project" value="GO_Central"/>
</dbReference>
<dbReference type="GO" id="GO:0005829">
    <property type="term" value="C:cytosol"/>
    <property type="evidence" value="ECO:0000314"/>
    <property type="project" value="HPA"/>
</dbReference>
<dbReference type="GO" id="GO:0070062">
    <property type="term" value="C:extracellular exosome"/>
    <property type="evidence" value="ECO:0007005"/>
    <property type="project" value="UniProtKB"/>
</dbReference>
<dbReference type="GO" id="GO:0042587">
    <property type="term" value="C:glycogen granule"/>
    <property type="evidence" value="ECO:0007669"/>
    <property type="project" value="Ensembl"/>
</dbReference>
<dbReference type="GO" id="GO:0005794">
    <property type="term" value="C:Golgi apparatus"/>
    <property type="evidence" value="ECO:0000314"/>
    <property type="project" value="HPA"/>
</dbReference>
<dbReference type="GO" id="GO:0042470">
    <property type="term" value="C:melanosome"/>
    <property type="evidence" value="ECO:0007669"/>
    <property type="project" value="UniProtKB-SubCell"/>
</dbReference>
<dbReference type="GO" id="GO:0016020">
    <property type="term" value="C:membrane"/>
    <property type="evidence" value="ECO:0007005"/>
    <property type="project" value="UniProtKB"/>
</dbReference>
<dbReference type="GO" id="GO:0005886">
    <property type="term" value="C:plasma membrane"/>
    <property type="evidence" value="ECO:0000314"/>
    <property type="project" value="HPA"/>
</dbReference>
<dbReference type="GO" id="GO:0019171">
    <property type="term" value="F:(3R)-hydroxyacyl-[acyl-carrier-protein] dehydratase activity"/>
    <property type="evidence" value="ECO:0007669"/>
    <property type="project" value="UniProtKB-EC"/>
</dbReference>
<dbReference type="GO" id="GO:0004316">
    <property type="term" value="F:3-oxoacyl-[acyl-carrier-protein] reductase (NADPH) activity"/>
    <property type="evidence" value="ECO:0007669"/>
    <property type="project" value="UniProtKB-EC"/>
</dbReference>
<dbReference type="GO" id="GO:0004315">
    <property type="term" value="F:3-oxoacyl-[acyl-carrier-protein] synthase activity"/>
    <property type="evidence" value="ECO:0007669"/>
    <property type="project" value="UniProtKB-EC"/>
</dbReference>
<dbReference type="GO" id="GO:0004313">
    <property type="term" value="F:[acyl-carrier-protein] S-acetyltransferase activity"/>
    <property type="evidence" value="ECO:0000314"/>
    <property type="project" value="FlyBase"/>
</dbReference>
<dbReference type="GO" id="GO:0004314">
    <property type="term" value="F:[acyl-carrier-protein] S-malonyltransferase activity"/>
    <property type="evidence" value="ECO:0007669"/>
    <property type="project" value="UniProtKB-EC"/>
</dbReference>
<dbReference type="GO" id="GO:0045296">
    <property type="term" value="F:cadherin binding"/>
    <property type="evidence" value="ECO:0007005"/>
    <property type="project" value="BHF-UCL"/>
</dbReference>
<dbReference type="GO" id="GO:0141148">
    <property type="term" value="F:enoyl-[acyl-carrier-protein] reductase (NADPH) activity"/>
    <property type="evidence" value="ECO:0007669"/>
    <property type="project" value="UniProtKB-EC"/>
</dbReference>
<dbReference type="GO" id="GO:0004312">
    <property type="term" value="F:fatty acid synthase activity"/>
    <property type="evidence" value="ECO:0000269"/>
    <property type="project" value="Reactome"/>
</dbReference>
<dbReference type="GO" id="GO:0016297">
    <property type="term" value="F:fatty acyl-[ACP] hydrolase activity"/>
    <property type="evidence" value="ECO:0007669"/>
    <property type="project" value="UniProtKB-EC"/>
</dbReference>
<dbReference type="GO" id="GO:0042802">
    <property type="term" value="F:identical protein binding"/>
    <property type="evidence" value="ECO:0007669"/>
    <property type="project" value="Ensembl"/>
</dbReference>
<dbReference type="GO" id="GO:0031177">
    <property type="term" value="F:phosphopantetheine binding"/>
    <property type="evidence" value="ECO:0007669"/>
    <property type="project" value="InterPro"/>
</dbReference>
<dbReference type="GO" id="GO:0003723">
    <property type="term" value="F:RNA binding"/>
    <property type="evidence" value="ECO:0007005"/>
    <property type="project" value="UniProtKB"/>
</dbReference>
<dbReference type="GO" id="GO:0006084">
    <property type="term" value="P:acetyl-CoA metabolic process"/>
    <property type="evidence" value="ECO:0007669"/>
    <property type="project" value="Ensembl"/>
</dbReference>
<dbReference type="GO" id="GO:0071353">
    <property type="term" value="P:cellular response to interleukin-4"/>
    <property type="evidence" value="ECO:0007669"/>
    <property type="project" value="Ensembl"/>
</dbReference>
<dbReference type="GO" id="GO:0090557">
    <property type="term" value="P:establishment of endothelial intestinal barrier"/>
    <property type="evidence" value="ECO:0007669"/>
    <property type="project" value="Ensembl"/>
</dbReference>
<dbReference type="GO" id="GO:0008611">
    <property type="term" value="P:ether lipid biosynthetic process"/>
    <property type="evidence" value="ECO:0007669"/>
    <property type="project" value="Ensembl"/>
</dbReference>
<dbReference type="GO" id="GO:0006633">
    <property type="term" value="P:fatty acid biosynthetic process"/>
    <property type="evidence" value="ECO:0000318"/>
    <property type="project" value="GO_Central"/>
</dbReference>
<dbReference type="GO" id="GO:0006631">
    <property type="term" value="P:fatty acid metabolic process"/>
    <property type="evidence" value="ECO:0000304"/>
    <property type="project" value="ProtInc"/>
</dbReference>
<dbReference type="GO" id="GO:0046949">
    <property type="term" value="P:fatty-acyl-CoA biosynthetic process"/>
    <property type="evidence" value="ECO:0000304"/>
    <property type="project" value="Reactome"/>
</dbReference>
<dbReference type="GO" id="GO:0006954">
    <property type="term" value="P:inflammatory response"/>
    <property type="evidence" value="ECO:0007669"/>
    <property type="project" value="Ensembl"/>
</dbReference>
<dbReference type="GO" id="GO:0030879">
    <property type="term" value="P:mammary gland development"/>
    <property type="evidence" value="ECO:0007669"/>
    <property type="project" value="Ensembl"/>
</dbReference>
<dbReference type="GO" id="GO:0044788">
    <property type="term" value="P:modulation by host of viral process"/>
    <property type="evidence" value="ECO:0000314"/>
    <property type="project" value="UniProtKB"/>
</dbReference>
<dbReference type="GO" id="GO:0030224">
    <property type="term" value="P:monocyte differentiation"/>
    <property type="evidence" value="ECO:0007669"/>
    <property type="project" value="Ensembl"/>
</dbReference>
<dbReference type="GO" id="GO:0030223">
    <property type="term" value="P:neutrophil differentiation"/>
    <property type="evidence" value="ECO:0007669"/>
    <property type="project" value="Ensembl"/>
</dbReference>
<dbReference type="GO" id="GO:0001649">
    <property type="term" value="P:osteoblast differentiation"/>
    <property type="evidence" value="ECO:0007005"/>
    <property type="project" value="UniProtKB"/>
</dbReference>
<dbReference type="GO" id="GO:0007584">
    <property type="term" value="P:response to nutrient"/>
    <property type="evidence" value="ECO:0007669"/>
    <property type="project" value="Ensembl"/>
</dbReference>
<dbReference type="CDD" id="cd05195">
    <property type="entry name" value="enoyl_red"/>
    <property type="match status" value="1"/>
</dbReference>
<dbReference type="CDD" id="cd08954">
    <property type="entry name" value="KR_1_FAS_SDR_x"/>
    <property type="match status" value="2"/>
</dbReference>
<dbReference type="CDD" id="cd00833">
    <property type="entry name" value="PKS"/>
    <property type="match status" value="1"/>
</dbReference>
<dbReference type="FunFam" id="1.10.1200.10:FF:000013">
    <property type="entry name" value="Fatty acid synthase"/>
    <property type="match status" value="1"/>
</dbReference>
<dbReference type="FunFam" id="3.10.129.110:FF:000002">
    <property type="entry name" value="Fatty acid synthase"/>
    <property type="match status" value="1"/>
</dbReference>
<dbReference type="FunFam" id="3.40.366.10:FF:000005">
    <property type="entry name" value="Fatty acid synthase"/>
    <property type="match status" value="1"/>
</dbReference>
<dbReference type="FunFam" id="3.40.47.10:FF:000033">
    <property type="entry name" value="Fatty acid synthase"/>
    <property type="match status" value="1"/>
</dbReference>
<dbReference type="FunFam" id="3.40.50.150:FF:000186">
    <property type="entry name" value="Fatty acid synthase"/>
    <property type="match status" value="1"/>
</dbReference>
<dbReference type="FunFam" id="3.40.50.1820:FF:000059">
    <property type="entry name" value="Fatty acid synthase"/>
    <property type="match status" value="1"/>
</dbReference>
<dbReference type="FunFam" id="3.40.50.1820:FF:000105">
    <property type="entry name" value="Fatty acid synthase"/>
    <property type="match status" value="1"/>
</dbReference>
<dbReference type="FunFam" id="3.40.50.720:FF:000249">
    <property type="entry name" value="Fatty acid synthase"/>
    <property type="match status" value="1"/>
</dbReference>
<dbReference type="FunFam" id="3.90.180.10:FF:000015">
    <property type="entry name" value="Fatty acid synthase"/>
    <property type="match status" value="1"/>
</dbReference>
<dbReference type="FunFam" id="3.40.50.720:FF:000209">
    <property type="entry name" value="Polyketide synthase Pks12"/>
    <property type="match status" value="1"/>
</dbReference>
<dbReference type="Gene3D" id="3.30.70.3290">
    <property type="match status" value="1"/>
</dbReference>
<dbReference type="Gene3D" id="3.40.47.10">
    <property type="match status" value="1"/>
</dbReference>
<dbReference type="Gene3D" id="1.10.1200.10">
    <property type="entry name" value="ACP-like"/>
    <property type="match status" value="1"/>
</dbReference>
<dbReference type="Gene3D" id="3.40.50.1820">
    <property type="entry name" value="alpha/beta hydrolase"/>
    <property type="match status" value="2"/>
</dbReference>
<dbReference type="Gene3D" id="3.40.366.10">
    <property type="entry name" value="Malonyl-Coenzyme A Acyl Carrier Protein, domain 2"/>
    <property type="match status" value="1"/>
</dbReference>
<dbReference type="Gene3D" id="3.90.180.10">
    <property type="entry name" value="Medium-chain alcohol dehydrogenases, catalytic domain"/>
    <property type="match status" value="1"/>
</dbReference>
<dbReference type="Gene3D" id="3.40.50.720">
    <property type="entry name" value="NAD(P)-binding Rossmann-like Domain"/>
    <property type="match status" value="1"/>
</dbReference>
<dbReference type="Gene3D" id="3.10.129.110">
    <property type="entry name" value="Polyketide synthase dehydratase"/>
    <property type="match status" value="1"/>
</dbReference>
<dbReference type="Gene3D" id="3.40.50.150">
    <property type="entry name" value="Vaccinia Virus protein VP39"/>
    <property type="match status" value="1"/>
</dbReference>
<dbReference type="InterPro" id="IPR029058">
    <property type="entry name" value="AB_hydrolase_fold"/>
</dbReference>
<dbReference type="InterPro" id="IPR001227">
    <property type="entry name" value="Ac_transferase_dom_sf"/>
</dbReference>
<dbReference type="InterPro" id="IPR036736">
    <property type="entry name" value="ACP-like_sf"/>
</dbReference>
<dbReference type="InterPro" id="IPR014043">
    <property type="entry name" value="Acyl_transferase_dom"/>
</dbReference>
<dbReference type="InterPro" id="IPR016035">
    <property type="entry name" value="Acyl_Trfase/lysoPLipase"/>
</dbReference>
<dbReference type="InterPro" id="IPR013149">
    <property type="entry name" value="ADH-like_C"/>
</dbReference>
<dbReference type="InterPro" id="IPR049391">
    <property type="entry name" value="FAS_pseudo-KR"/>
</dbReference>
<dbReference type="InterPro" id="IPR011032">
    <property type="entry name" value="GroES-like_sf"/>
</dbReference>
<dbReference type="InterPro" id="IPR018201">
    <property type="entry name" value="Ketoacyl_synth_AS"/>
</dbReference>
<dbReference type="InterPro" id="IPR014031">
    <property type="entry name" value="Ketoacyl_synth_C"/>
</dbReference>
<dbReference type="InterPro" id="IPR014030">
    <property type="entry name" value="Ketoacyl_synth_N"/>
</dbReference>
<dbReference type="InterPro" id="IPR016036">
    <property type="entry name" value="Malonyl_transacylase_ACP-bd"/>
</dbReference>
<dbReference type="InterPro" id="IPR013217">
    <property type="entry name" value="Methyltransf_12"/>
</dbReference>
<dbReference type="InterPro" id="IPR036291">
    <property type="entry name" value="NAD(P)-bd_dom_sf"/>
</dbReference>
<dbReference type="InterPro" id="IPR032821">
    <property type="entry name" value="PKS_assoc"/>
</dbReference>
<dbReference type="InterPro" id="IPR020841">
    <property type="entry name" value="PKS_Beta-ketoAc_synthase_dom"/>
</dbReference>
<dbReference type="InterPro" id="IPR042104">
    <property type="entry name" value="PKS_dehydratase_sf"/>
</dbReference>
<dbReference type="InterPro" id="IPR020807">
    <property type="entry name" value="PKS_DH"/>
</dbReference>
<dbReference type="InterPro" id="IPR049552">
    <property type="entry name" value="PKS_DH_N"/>
</dbReference>
<dbReference type="InterPro" id="IPR020843">
    <property type="entry name" value="PKS_ER"/>
</dbReference>
<dbReference type="InterPro" id="IPR013968">
    <property type="entry name" value="PKS_KR"/>
</dbReference>
<dbReference type="InterPro" id="IPR049900">
    <property type="entry name" value="PKS_mFAS_DH"/>
</dbReference>
<dbReference type="InterPro" id="IPR050091">
    <property type="entry name" value="PKS_NRPS_Biosynth_Enz"/>
</dbReference>
<dbReference type="InterPro" id="IPR020806">
    <property type="entry name" value="PKS_PP-bd"/>
</dbReference>
<dbReference type="InterPro" id="IPR009081">
    <property type="entry name" value="PP-bd_ACP"/>
</dbReference>
<dbReference type="InterPro" id="IPR006162">
    <property type="entry name" value="Ppantetheine_attach_site"/>
</dbReference>
<dbReference type="InterPro" id="IPR029063">
    <property type="entry name" value="SAM-dependent_MTases_sf"/>
</dbReference>
<dbReference type="InterPro" id="IPR001031">
    <property type="entry name" value="Thioesterase"/>
</dbReference>
<dbReference type="InterPro" id="IPR016039">
    <property type="entry name" value="Thiolase-like"/>
</dbReference>
<dbReference type="PANTHER" id="PTHR43775">
    <property type="entry name" value="FATTY ACID SYNTHASE"/>
    <property type="match status" value="1"/>
</dbReference>
<dbReference type="PANTHER" id="PTHR43775:SF7">
    <property type="entry name" value="FATTY ACID SYNTHASE"/>
    <property type="match status" value="1"/>
</dbReference>
<dbReference type="Pfam" id="PF00698">
    <property type="entry name" value="Acyl_transf_1"/>
    <property type="match status" value="1"/>
</dbReference>
<dbReference type="Pfam" id="PF00107">
    <property type="entry name" value="ADH_zinc_N"/>
    <property type="match status" value="1"/>
</dbReference>
<dbReference type="Pfam" id="PF21149">
    <property type="entry name" value="FAS_pseudo-KR"/>
    <property type="match status" value="1"/>
</dbReference>
<dbReference type="Pfam" id="PF16197">
    <property type="entry name" value="KAsynt_C_assoc"/>
    <property type="match status" value="1"/>
</dbReference>
<dbReference type="Pfam" id="PF00109">
    <property type="entry name" value="ketoacyl-synt"/>
    <property type="match status" value="1"/>
</dbReference>
<dbReference type="Pfam" id="PF02801">
    <property type="entry name" value="Ketoacyl-synt_C"/>
    <property type="match status" value="1"/>
</dbReference>
<dbReference type="Pfam" id="PF08659">
    <property type="entry name" value="KR"/>
    <property type="match status" value="1"/>
</dbReference>
<dbReference type="Pfam" id="PF08242">
    <property type="entry name" value="Methyltransf_12"/>
    <property type="match status" value="1"/>
</dbReference>
<dbReference type="Pfam" id="PF21089">
    <property type="entry name" value="PKS_DH_N"/>
    <property type="match status" value="1"/>
</dbReference>
<dbReference type="Pfam" id="PF00550">
    <property type="entry name" value="PP-binding"/>
    <property type="match status" value="1"/>
</dbReference>
<dbReference type="Pfam" id="PF00975">
    <property type="entry name" value="Thioesterase"/>
    <property type="match status" value="1"/>
</dbReference>
<dbReference type="SMART" id="SM00827">
    <property type="entry name" value="PKS_AT"/>
    <property type="match status" value="1"/>
</dbReference>
<dbReference type="SMART" id="SM00826">
    <property type="entry name" value="PKS_DH"/>
    <property type="match status" value="1"/>
</dbReference>
<dbReference type="SMART" id="SM00829">
    <property type="entry name" value="PKS_ER"/>
    <property type="match status" value="1"/>
</dbReference>
<dbReference type="SMART" id="SM00822">
    <property type="entry name" value="PKS_KR"/>
    <property type="match status" value="1"/>
</dbReference>
<dbReference type="SMART" id="SM00825">
    <property type="entry name" value="PKS_KS"/>
    <property type="match status" value="1"/>
</dbReference>
<dbReference type="SMART" id="SM00823">
    <property type="entry name" value="PKS_PP"/>
    <property type="match status" value="1"/>
</dbReference>
<dbReference type="SUPFAM" id="SSF47336">
    <property type="entry name" value="ACP-like"/>
    <property type="match status" value="1"/>
</dbReference>
<dbReference type="SUPFAM" id="SSF53474">
    <property type="entry name" value="alpha/beta-Hydrolases"/>
    <property type="match status" value="1"/>
</dbReference>
<dbReference type="SUPFAM" id="SSF52151">
    <property type="entry name" value="FabD/lysophospholipase-like"/>
    <property type="match status" value="1"/>
</dbReference>
<dbReference type="SUPFAM" id="SSF50129">
    <property type="entry name" value="GroES-like"/>
    <property type="match status" value="1"/>
</dbReference>
<dbReference type="SUPFAM" id="SSF51735">
    <property type="entry name" value="NAD(P)-binding Rossmann-fold domains"/>
    <property type="match status" value="2"/>
</dbReference>
<dbReference type="SUPFAM" id="SSF55048">
    <property type="entry name" value="Probable ACP-binding domain of malonyl-CoA ACP transacylase"/>
    <property type="match status" value="1"/>
</dbReference>
<dbReference type="SUPFAM" id="SSF53335">
    <property type="entry name" value="S-adenosyl-L-methionine-dependent methyltransferases"/>
    <property type="match status" value="1"/>
</dbReference>
<dbReference type="SUPFAM" id="SSF53901">
    <property type="entry name" value="Thiolase-like"/>
    <property type="match status" value="1"/>
</dbReference>
<dbReference type="PROSITE" id="PS50075">
    <property type="entry name" value="CARRIER"/>
    <property type="match status" value="1"/>
</dbReference>
<dbReference type="PROSITE" id="PS00606">
    <property type="entry name" value="KS3_1"/>
    <property type="match status" value="1"/>
</dbReference>
<dbReference type="PROSITE" id="PS52004">
    <property type="entry name" value="KS3_2"/>
    <property type="match status" value="1"/>
</dbReference>
<dbReference type="PROSITE" id="PS00012">
    <property type="entry name" value="PHOSPHOPANTETHEINE"/>
    <property type="match status" value="1"/>
</dbReference>
<dbReference type="PROSITE" id="PS52019">
    <property type="entry name" value="PKS_MFAS_DH"/>
    <property type="match status" value="1"/>
</dbReference>
<accession>P49327</accession>
<accession>Q13479</accession>
<accession>Q16702</accession>
<accession>Q4LE83</accession>
<accession>Q6P4U5</accession>
<accession>Q6SS02</accession>
<accession>Q969R1</accession>
<accession>Q96C68</accession>
<accession>Q96IT0</accession>